<sequence length="3661" mass="410501">MSRRAPGSRLSSGGGGGGTKYPRSWNDWQPRTDSASADPDNLKYSSSRDRGGSSSYGLQPSNSAVVSRQRHDDTRVHADIQNDEKGGYSVNGGSGENTYGRKSLGQELRVNNVTSPEFTSVQHGSRALATKDMRKSQERSMSYSDESRLSNLLRRITREDDRDRRLATVKQLKEFIQQPENKLVLVKQLDNILAAVHDVLNESSKLLQELRQEGACCLGLLCASLSYEAEKIFKWIFSKFSSSAKDEVKLLYLCATYKALETVGEKKAFSSVMQLVMTSLQSILENVDTPELLCKCVKCILLVARCYPHIFSTNFRDTVDILVGWHIDHTQKPSLTQQVSGWLQSLEPFWVADLAFSTTLLGQFLEDMEAYAEDLSHVASGESVDEDVPPPSVSLPKLAALLRVFSTVVRSIGERFSPIRGPPITEAYVTDVLYRVMRCVTAANQVFFSEAVLTAANECVGVLLGSLDPSMTIHCDMVITYGLDQLENCQTCGTDYIISVLNLLTLIVEQINTKLPSSFVEKLFIPSSKLLFLRYHKEKEVVAVAHAVYQAVLSLKNIPVLETAYKLILGEMTCALNNLLHSLQLPEACSEIKHEAFKNHVFNVDNAKFVVIFDLSALTTIGNAKNSLIGMWALSPTVFALLSKNLMIVHSDLAVHFPAIQYAVLYTLYSHCTRHDHFISSSLSSSSPSLFDGAVISTVTTATKKHFSIILNLLGILLKKDNLNQDTRKLLMTWALEAAVLMKKSETYAPLFSLPSFHKFCKGLLANTLVEDVNICLQACSSLHALSSSLPDDLLQRCVDVCRVQLVHSGTRIRQAFGKLLKSIPLDVVLSNNNHTEIQEISLALRSHMSKAPSNTFHPQDFSDVISFILYGNSHRTGKDNWLERLFYSCQRLDKRDQSTIPRNLLKTDAVLWQWAIWEAAQFTVLSKLRTPLGRAQDTFQTIEGIIRSLAAHTLNPDQDVSQWTTADNDEGHGNNQLRLVLLLQYLENLEKLMYNAYEGCANALTSPPKVIRTFFYTNRQTCQDWLTRIRLSIMRVGLLAGQPAVTVRHGFDLLTEMKTTSLSQGNELEVTIMMVVEALCELHCPEAIQGIAVWSSSIVGKNLLWINSVAQQAEGRFEKASVEYQEHLCAMTGVDCCISSFDKSVLTLANAGRNSASPKHSLNGESRKTVLSKPTDSSPEVINYLGNKACECYISIADWAAVQEWQNAIHDLKKSTSSTSLNLKADFNYIKSLSSFESGKFVECTEQLELLPGENINLLAGGSKEKIDMKKLLPNMLSPDPRELQKSIEVQLLRSSVCLATALNPIEQDQKWQSITENVVKYLKQTSRIAIGPLRLSTLTVSQSLPVLSTLQLYCSSALENTVSNRLSTEDCLIPLFSEALRSCKQHDVRPWMQALRYTMYQNQLLEKIKEQTVPIRSHLMELGLTAAKFARKRGNVSLATRLLAQCSEVQLGKTTTAQDLVQHFKKLSTQGQVDEKWGPELDIEKTKLLYTAGQSTHAMEMLSSCAISFCKSVKAEYAVAKSILTLAKWIQAEWKEISGQLKQVYRAQHQQNFTGLSTLSKNILTLIELPSVNTMEEEYPRIESESTVHIGVGEPDFILGQLYHLSSVQAPEVAKSWAALASWAYRWGRKVVDNASQGEGVRLLPREKSEVQNLLPDTITEEEKERIYGILGQAVCRPAGIQDEDITLQITESEDNEEDDMVDVIWRQLISSCPWLSELDESATEGVIKVWRKVVDRIFSLYKLSCSAYFTFLKLNAGQIPLDEDDPRLHLSHRVEQSTDDMIVMATLRLLRLLVKHAGELRQYLEHGLETTPTAPWRGIIPQLFSRLNHPEVYVRQSICNLLCRVAQDSPHLILYPAIVGTISLSSESQASGNKFSTAIPTLLGNIQGEELLVSECEGGSPPASQDSNKDEPKSGLNEDQAMMQDCYSKIVDKLSSANPTMVLQVQMLVAELRRVTVLWDELWLGVLLQQHMYVLRRIQQLEDEVKRVQNNNTLRKEEKIAIMREKHTALMKPIVFALEHVRSITAAPAETPHEKWFQDNYGDAIENALEKLKTPLNPAKPGSSWIPFKEIMLSLQQRAQKRASYILRLEEISPWLAAMTNTEIALPGEVSARDTVTIHSVGGTITILPTKTKPKKLLFLGSDGKSYPYLFKGLEDLHLDERIMQFLSIVNTMFATINRQETPRFHARHYSVTPLGTRSGLIQWVDGATPLFGLYKRWQQREAALQAQKAQDSYQTPQNPGIVPRPSELYYSKIGPALKTVGLSLDVSRRDWPLHVMKAVLEELMEATPPNLLAKELWSSCTTPDEWWRVTQSYARSTAVMSMVGYIIGLGDRHLDNVLIDMTTGEVVHIDYNVCFEKGKSLRVPEKVPFRMTQNIETALGVTGVEGVFRLSCEQVLHIMRRGRETLLTLLEAFVYDPLVDWTAGGEAGFAGAVYGGGGQQAESKQSKREMEREITRSLFSSRVAEIKVNWFKNRDEMLVVLPKLDGSLDEYLSLQEQLTDVEKLQGKLLEEIEFLEGAEGVDHPSHTLQHRYSEHTQLQTQQRAVQEAIQVKLNEFEQWITHYQAAFNNLEATQLASLLQEISTQMDLGPPSYVPATAFLQNAGQAHLISQCEQLEGEVGALLQQRRSVLRGCLEQLHHYATVALQYPKAIFQKHRIEQWKTWMEELICNTTVERCQELYRKYEMQYAPQPPPTVCQFITATEMTLQRYAADINSRLIRQVERLKQEAVTVPVCEDQLKEIERCIKVFLHENGEEGSLSLASVIISALCTLTRRNLMMEGAASSAGEQLVDLTSRDGAWFLEELCSMSGNVTCLVQLLKQCHLVPQDLDIPNPMEASETVHLANGVYTSLQELNSNFRQIIFPEALRCLMKGEYTLESMLHELDGLIEQTTDGVPLQTLVESLQAYLRNAAMGLEEETHAHYIDVARLLHAQYGELIQPRNGSVDETPKMSAGQMLLVAFDGMFAQVETAFSLLVEKLNKMEIPIAWRKIDIIREARSTQVNFFDDDNHRQVLEEIFFLKRLQTIKEFFRLCGTFSKTLSGSSSLEDQNTVNGPVQIVNVKTLFRNSCFSEDQMAKPIKAFTADFVRQLLIGLPNQALGLTLCSFISALGVDIIAQVEAKDFGAESKVSVDDLCKKAVEHNIQIGKFSQLVMNRATVLASSYDTAWKKHDLVRRLETSISSCKTSLQRVQLHIAMFQWQHEDLLINRPQAMSVTPPPRSAILTSMKKKLHTLSQIETSIATVQEKLAALESSIEQRLKWAGGANPALAPVLQDFEATIAERRNLVLKESQRASQVTFLCSNIIHFESLRTRTAEALNLDAALFELIKRCQQMCSFASQFNSSVSELELRLLQRVDTGLEHPIGSSEWLLSAHKQLTQDMSTQRAIQTEKEQQIETVCETIQNLVDNIKTVLTGHNRQLGDVKHLLKAMAKDEEAALADGEDVPYENSVRQFLGEYKSWQDNIQTVLFTLVQAMGQVRSQEHVEMLQEITPTLKELKTQSQSIYNNLVSFASPLVTDATNECSSPTSSATYQPSFAAAVRSNTGQKTQPDVMSQNARKLIQKNLATSADTPPSTVPGTGKSVACSPKKAVRDPKTGKAVQERNSYAVSVWKRVKAKLEGRDVDPNRRMSVAEQVDYVIKEATNLDNLAQLYEGWTAWV</sequence>
<organism>
    <name type="scientific">Homo sapiens</name>
    <name type="common">Human</name>
    <dbReference type="NCBI Taxonomy" id="9606"/>
    <lineage>
        <taxon>Eukaryota</taxon>
        <taxon>Metazoa</taxon>
        <taxon>Chordata</taxon>
        <taxon>Craniata</taxon>
        <taxon>Vertebrata</taxon>
        <taxon>Euteleostomi</taxon>
        <taxon>Mammalia</taxon>
        <taxon>Eutheria</taxon>
        <taxon>Euarchontoglires</taxon>
        <taxon>Primates</taxon>
        <taxon>Haplorrhini</taxon>
        <taxon>Catarrhini</taxon>
        <taxon>Hominidae</taxon>
        <taxon>Homo</taxon>
    </lineage>
</organism>
<dbReference type="EC" id="2.7.11.1"/>
<dbReference type="EMBL" id="AF186377">
    <property type="protein sequence ID" value="AAK58892.1"/>
    <property type="molecule type" value="mRNA"/>
</dbReference>
<dbReference type="EMBL" id="AB061371">
    <property type="protein sequence ID" value="BAB70696.1"/>
    <property type="molecule type" value="mRNA"/>
</dbReference>
<dbReference type="EMBL" id="AY014957">
    <property type="protein sequence ID" value="AAK00511.1"/>
    <property type="molecule type" value="mRNA"/>
</dbReference>
<dbReference type="EMBL" id="AF395444">
    <property type="protein sequence ID" value="AAM73708.1"/>
    <property type="molecule type" value="mRNA"/>
</dbReference>
<dbReference type="EMBL" id="AC092287">
    <property type="status" value="NOT_ANNOTATED_CDS"/>
    <property type="molecule type" value="Genomic_DNA"/>
</dbReference>
<dbReference type="EMBL" id="AB007881">
    <property type="protein sequence ID" value="BAA24851.2"/>
    <property type="molecule type" value="mRNA"/>
</dbReference>
<dbReference type="EMBL" id="U32581">
    <property type="protein sequence ID" value="AAA86535.2"/>
    <property type="status" value="ALT_INIT"/>
    <property type="molecule type" value="mRNA"/>
</dbReference>
<dbReference type="CCDS" id="CCDS45430.1">
    <molecule id="Q96Q15-1"/>
</dbReference>
<dbReference type="PIR" id="JC6084">
    <property type="entry name" value="JC6084"/>
</dbReference>
<dbReference type="RefSeq" id="NP_055907.3">
    <molecule id="Q96Q15-1"/>
    <property type="nucleotide sequence ID" value="NM_015092.4"/>
</dbReference>
<dbReference type="PDB" id="6L53">
    <property type="method" value="EM"/>
    <property type="resolution" value="3.63 A"/>
    <property type="chains" value="A=1-3661"/>
</dbReference>
<dbReference type="PDB" id="6L54">
    <property type="method" value="EM"/>
    <property type="resolution" value="3.43 A"/>
    <property type="chains" value="A=1-3661"/>
</dbReference>
<dbReference type="PDB" id="6SYT">
    <property type="method" value="EM"/>
    <property type="resolution" value="3.45 A"/>
    <property type="chains" value="A=311-3661"/>
</dbReference>
<dbReference type="PDB" id="6Z3R">
    <property type="method" value="EM"/>
    <property type="resolution" value="2.97 A"/>
    <property type="chains" value="A=259-3661"/>
</dbReference>
<dbReference type="PDB" id="7PW4">
    <property type="method" value="EM"/>
    <property type="resolution" value="3.27 A"/>
    <property type="chains" value="A=311-3661"/>
</dbReference>
<dbReference type="PDB" id="7PW5">
    <property type="method" value="EM"/>
    <property type="resolution" value="3.40 A"/>
    <property type="chains" value="A=311-3661"/>
</dbReference>
<dbReference type="PDB" id="7PW6">
    <property type="method" value="EM"/>
    <property type="resolution" value="3.05 A"/>
    <property type="chains" value="A=766-3661"/>
</dbReference>
<dbReference type="PDB" id="7PW7">
    <property type="method" value="EM"/>
    <property type="resolution" value="3.59 A"/>
    <property type="chains" value="A=311-3661"/>
</dbReference>
<dbReference type="PDB" id="7PW8">
    <property type="method" value="EM"/>
    <property type="resolution" value="2.82 A"/>
    <property type="chains" value="A=311-3661"/>
</dbReference>
<dbReference type="PDB" id="7PW9">
    <property type="method" value="EM"/>
    <property type="resolution" value="3.12 A"/>
    <property type="chains" value="A=311-3661"/>
</dbReference>
<dbReference type="PDBsum" id="6L53"/>
<dbReference type="PDBsum" id="6L54"/>
<dbReference type="PDBsum" id="6SYT"/>
<dbReference type="PDBsum" id="6Z3R"/>
<dbReference type="PDBsum" id="7PW4"/>
<dbReference type="PDBsum" id="7PW5"/>
<dbReference type="PDBsum" id="7PW6"/>
<dbReference type="PDBsum" id="7PW7"/>
<dbReference type="PDBsum" id="7PW8"/>
<dbReference type="PDBsum" id="7PW9"/>
<dbReference type="EMDB" id="EMD-0836"/>
<dbReference type="EMDB" id="EMD-0837"/>
<dbReference type="EMDB" id="EMD-10347"/>
<dbReference type="EMDB" id="EMD-11063"/>
<dbReference type="EMDB" id="EMD-13674"/>
<dbReference type="EMDB" id="EMD-13675"/>
<dbReference type="EMDB" id="EMD-13676"/>
<dbReference type="EMDB" id="EMD-13677"/>
<dbReference type="EMDB" id="EMD-13678"/>
<dbReference type="EMDB" id="EMD-13679"/>
<dbReference type="EMDB" id="EMD-2662"/>
<dbReference type="EMDB" id="EMD-2663"/>
<dbReference type="EMDB" id="EMD-2664"/>
<dbReference type="EMDB" id="EMD-2665"/>
<dbReference type="EMDB" id="EMD-2666"/>
<dbReference type="EMDB" id="EMD-3065"/>
<dbReference type="EMDB" id="EMD-3066"/>
<dbReference type="EMDB" id="EMD-3278"/>
<dbReference type="SMR" id="Q96Q15"/>
<dbReference type="BioGRID" id="116687">
    <property type="interactions" value="99"/>
</dbReference>
<dbReference type="ComplexPortal" id="CPX-2827">
    <property type="entry name" value="SMG1C protein kinase complex"/>
</dbReference>
<dbReference type="CORUM" id="Q96Q15"/>
<dbReference type="FunCoup" id="Q96Q15">
    <property type="interactions" value="4049"/>
</dbReference>
<dbReference type="IntAct" id="Q96Q15">
    <property type="interactions" value="46"/>
</dbReference>
<dbReference type="MINT" id="Q96Q15"/>
<dbReference type="STRING" id="9606.ENSP00000402515"/>
<dbReference type="BindingDB" id="Q96Q15"/>
<dbReference type="ChEMBL" id="CHEMBL1795195"/>
<dbReference type="GuidetoPHARMACOLOGY" id="2201"/>
<dbReference type="GlyGen" id="Q96Q15">
    <property type="glycosylation" value="4 sites, 1 N-linked glycan (1 site), 1 O-linked glycan (1 site)"/>
</dbReference>
<dbReference type="iPTMnet" id="Q96Q15"/>
<dbReference type="MetOSite" id="Q96Q15"/>
<dbReference type="PhosphoSitePlus" id="Q96Q15"/>
<dbReference type="SwissPalm" id="Q96Q15"/>
<dbReference type="BioMuta" id="SMG1"/>
<dbReference type="DMDM" id="322510104"/>
<dbReference type="jPOST" id="Q96Q15"/>
<dbReference type="MassIVE" id="Q96Q15"/>
<dbReference type="PaxDb" id="9606-ENSP00000402515"/>
<dbReference type="PeptideAtlas" id="Q96Q15"/>
<dbReference type="ProteomicsDB" id="77810">
    <molecule id="Q96Q15-1"/>
</dbReference>
<dbReference type="ProteomicsDB" id="77811">
    <molecule id="Q96Q15-2"/>
</dbReference>
<dbReference type="ProteomicsDB" id="77812">
    <molecule id="Q96Q15-3"/>
</dbReference>
<dbReference type="ProteomicsDB" id="77813">
    <molecule id="Q96Q15-4"/>
</dbReference>
<dbReference type="Pumba" id="Q96Q15"/>
<dbReference type="Antibodypedia" id="6280">
    <property type="antibodies" value="220 antibodies from 17 providers"/>
</dbReference>
<dbReference type="DNASU" id="23049"/>
<dbReference type="Ensembl" id="ENST00000446231.7">
    <molecule id="Q96Q15-1"/>
    <property type="protein sequence ID" value="ENSP00000402515.3"/>
    <property type="gene ID" value="ENSG00000157106.18"/>
</dbReference>
<dbReference type="GeneID" id="23049"/>
<dbReference type="KEGG" id="hsa:23049"/>
<dbReference type="MANE-Select" id="ENST00000446231.7">
    <property type="protein sequence ID" value="ENSP00000402515.3"/>
    <property type="RefSeq nucleotide sequence ID" value="NM_015092.5"/>
    <property type="RefSeq protein sequence ID" value="NP_055907.3"/>
</dbReference>
<dbReference type="UCSC" id="uc002dfm.4">
    <molecule id="Q96Q15-1"/>
    <property type="organism name" value="human"/>
</dbReference>
<dbReference type="AGR" id="HGNC:30045"/>
<dbReference type="CTD" id="23049"/>
<dbReference type="DisGeNET" id="23049"/>
<dbReference type="GeneCards" id="SMG1"/>
<dbReference type="HGNC" id="HGNC:30045">
    <property type="gene designation" value="SMG1"/>
</dbReference>
<dbReference type="HPA" id="ENSG00000157106">
    <property type="expression patterns" value="Low tissue specificity"/>
</dbReference>
<dbReference type="MIM" id="607032">
    <property type="type" value="gene"/>
</dbReference>
<dbReference type="neXtProt" id="NX_Q96Q15"/>
<dbReference type="OpenTargets" id="ENSG00000157106"/>
<dbReference type="PharmGKB" id="PA164725852"/>
<dbReference type="VEuPathDB" id="HostDB:ENSG00000157106"/>
<dbReference type="eggNOG" id="KOG0891">
    <property type="taxonomic scope" value="Eukaryota"/>
</dbReference>
<dbReference type="GeneTree" id="ENSGT00940000154776"/>
<dbReference type="InParanoid" id="Q96Q15"/>
<dbReference type="OMA" id="AFECHFT"/>
<dbReference type="OrthoDB" id="10065496at2759"/>
<dbReference type="PAN-GO" id="Q96Q15">
    <property type="GO annotations" value="7 GO annotations based on evolutionary models"/>
</dbReference>
<dbReference type="PhylomeDB" id="Q96Q15"/>
<dbReference type="TreeFam" id="TF352560"/>
<dbReference type="BRENDA" id="2.7.11.1">
    <property type="organism ID" value="2681"/>
</dbReference>
<dbReference type="PathwayCommons" id="Q96Q15"/>
<dbReference type="Reactome" id="R-HSA-975957">
    <property type="pathway name" value="Nonsense Mediated Decay (NMD) enhanced by the Exon Junction Complex (EJC)"/>
</dbReference>
<dbReference type="SignaLink" id="Q96Q15"/>
<dbReference type="SIGNOR" id="Q96Q15"/>
<dbReference type="BioGRID-ORCS" id="23049">
    <property type="hits" value="677 hits in 1205 CRISPR screens"/>
</dbReference>
<dbReference type="CD-CODE" id="DEE660B4">
    <property type="entry name" value="Stress granule"/>
</dbReference>
<dbReference type="ChiTaRS" id="SMG1">
    <property type="organism name" value="human"/>
</dbReference>
<dbReference type="GeneWiki" id="SMG1_(gene)"/>
<dbReference type="GenomeRNAi" id="23049"/>
<dbReference type="Pharos" id="Q96Q15">
    <property type="development level" value="Tchem"/>
</dbReference>
<dbReference type="PRO" id="PR:Q96Q15"/>
<dbReference type="Proteomes" id="UP000005640">
    <property type="component" value="Chromosome 16"/>
</dbReference>
<dbReference type="RNAct" id="Q96Q15">
    <property type="molecule type" value="protein"/>
</dbReference>
<dbReference type="Bgee" id="ENSG00000157106">
    <property type="expression patterns" value="Expressed in upper leg skin and 194 other cell types or tissues"/>
</dbReference>
<dbReference type="ExpressionAtlas" id="Q96Q15">
    <property type="expression patterns" value="baseline and differential"/>
</dbReference>
<dbReference type="GO" id="GO:0033391">
    <property type="term" value="C:chromatoid body"/>
    <property type="evidence" value="ECO:0000250"/>
    <property type="project" value="UniProtKB"/>
</dbReference>
<dbReference type="GO" id="GO:0005737">
    <property type="term" value="C:cytoplasm"/>
    <property type="evidence" value="ECO:0000314"/>
    <property type="project" value="UniProtKB"/>
</dbReference>
<dbReference type="GO" id="GO:0005829">
    <property type="term" value="C:cytosol"/>
    <property type="evidence" value="ECO:0000304"/>
    <property type="project" value="Reactome"/>
</dbReference>
<dbReference type="GO" id="GO:0005654">
    <property type="term" value="C:nucleoplasm"/>
    <property type="evidence" value="ECO:0000314"/>
    <property type="project" value="HPA"/>
</dbReference>
<dbReference type="GO" id="GO:0005634">
    <property type="term" value="C:nucleus"/>
    <property type="evidence" value="ECO:0000314"/>
    <property type="project" value="UniProtKB"/>
</dbReference>
<dbReference type="GO" id="GO:0005524">
    <property type="term" value="F:ATP binding"/>
    <property type="evidence" value="ECO:0007669"/>
    <property type="project" value="UniProtKB-KW"/>
</dbReference>
<dbReference type="GO" id="GO:0004697">
    <property type="term" value="F:diacylglycerol-dependent serine/threonine kinase activity"/>
    <property type="evidence" value="ECO:0000269"/>
    <property type="project" value="Reactome"/>
</dbReference>
<dbReference type="GO" id="GO:0046872">
    <property type="term" value="F:metal ion binding"/>
    <property type="evidence" value="ECO:0007669"/>
    <property type="project" value="UniProtKB-KW"/>
</dbReference>
<dbReference type="GO" id="GO:0004672">
    <property type="term" value="F:protein kinase activity"/>
    <property type="evidence" value="ECO:0000304"/>
    <property type="project" value="UniProtKB"/>
</dbReference>
<dbReference type="GO" id="GO:0106310">
    <property type="term" value="F:protein serine kinase activity"/>
    <property type="evidence" value="ECO:0007669"/>
    <property type="project" value="RHEA"/>
</dbReference>
<dbReference type="GO" id="GO:0004674">
    <property type="term" value="F:protein serine/threonine kinase activity"/>
    <property type="evidence" value="ECO:0000314"/>
    <property type="project" value="UniProtKB"/>
</dbReference>
<dbReference type="GO" id="GO:0003723">
    <property type="term" value="F:RNA binding"/>
    <property type="evidence" value="ECO:0007005"/>
    <property type="project" value="UniProtKB"/>
</dbReference>
<dbReference type="GO" id="GO:0042162">
    <property type="term" value="F:telomeric DNA binding"/>
    <property type="evidence" value="ECO:0000314"/>
    <property type="project" value="BHF-UCL"/>
</dbReference>
<dbReference type="GO" id="GO:0006974">
    <property type="term" value="P:DNA damage response"/>
    <property type="evidence" value="ECO:0000314"/>
    <property type="project" value="UniProtKB"/>
</dbReference>
<dbReference type="GO" id="GO:0006281">
    <property type="term" value="P:DNA repair"/>
    <property type="evidence" value="ECO:0007669"/>
    <property type="project" value="UniProtKB-KW"/>
</dbReference>
<dbReference type="GO" id="GO:0006406">
    <property type="term" value="P:mRNA export from nucleus"/>
    <property type="evidence" value="ECO:0000304"/>
    <property type="project" value="UniProtKB"/>
</dbReference>
<dbReference type="GO" id="GO:0000184">
    <property type="term" value="P:nuclear-transcribed mRNA catabolic process, nonsense-mediated decay"/>
    <property type="evidence" value="ECO:0000314"/>
    <property type="project" value="UniProtKB"/>
</dbReference>
<dbReference type="GO" id="GO:0018105">
    <property type="term" value="P:peptidyl-serine phosphorylation"/>
    <property type="evidence" value="ECO:0000314"/>
    <property type="project" value="UniProtKB"/>
</dbReference>
<dbReference type="GO" id="GO:0046854">
    <property type="term" value="P:phosphatidylinositol phosphate biosynthetic process"/>
    <property type="evidence" value="ECO:0000314"/>
    <property type="project" value="UniProtKB"/>
</dbReference>
<dbReference type="GO" id="GO:0046777">
    <property type="term" value="P:protein autophosphorylation"/>
    <property type="evidence" value="ECO:0000314"/>
    <property type="project" value="UniProtKB"/>
</dbReference>
<dbReference type="GO" id="GO:0032204">
    <property type="term" value="P:regulation of telomere maintenance"/>
    <property type="evidence" value="ECO:0000315"/>
    <property type="project" value="BHF-UCL"/>
</dbReference>
<dbReference type="CDD" id="cd05170">
    <property type="entry name" value="PIKKc_SMG1"/>
    <property type="match status" value="1"/>
</dbReference>
<dbReference type="FunFam" id="1.25.10.10:FF:000136">
    <property type="entry name" value="serine/threonine-protein kinase SMG1 isoform X1"/>
    <property type="match status" value="1"/>
</dbReference>
<dbReference type="FunFam" id="3.30.1010.10:FF:000010">
    <property type="entry name" value="serine/threonine-protein kinase SMG1 isoform X1"/>
    <property type="match status" value="1"/>
</dbReference>
<dbReference type="FunFam" id="1.10.1070.11:FF:000008">
    <property type="entry name" value="serine/threonine-protein kinase SMG1 isoform X2"/>
    <property type="match status" value="1"/>
</dbReference>
<dbReference type="Gene3D" id="1.25.10.10">
    <property type="entry name" value="Leucine-rich Repeat Variant"/>
    <property type="match status" value="1"/>
</dbReference>
<dbReference type="Gene3D" id="1.10.1070.11">
    <property type="entry name" value="Phosphatidylinositol 3-/4-kinase, catalytic domain"/>
    <property type="match status" value="1"/>
</dbReference>
<dbReference type="Gene3D" id="3.30.1010.10">
    <property type="entry name" value="Phosphatidylinositol 3-kinase Catalytic Subunit, Chain A, domain 4"/>
    <property type="match status" value="1"/>
</dbReference>
<dbReference type="InterPro" id="IPR011989">
    <property type="entry name" value="ARM-like"/>
</dbReference>
<dbReference type="InterPro" id="IPR016024">
    <property type="entry name" value="ARM-type_fold"/>
</dbReference>
<dbReference type="InterPro" id="IPR050517">
    <property type="entry name" value="DDR_Repair_Kinase"/>
</dbReference>
<dbReference type="InterPro" id="IPR003152">
    <property type="entry name" value="FATC_dom"/>
</dbReference>
<dbReference type="InterPro" id="IPR011009">
    <property type="entry name" value="Kinase-like_dom_sf"/>
</dbReference>
<dbReference type="InterPro" id="IPR000403">
    <property type="entry name" value="PI3/4_kinase_cat_dom"/>
</dbReference>
<dbReference type="InterPro" id="IPR036940">
    <property type="entry name" value="PI3/4_kinase_cat_sf"/>
</dbReference>
<dbReference type="InterPro" id="IPR018936">
    <property type="entry name" value="PI3/4_kinase_CS"/>
</dbReference>
<dbReference type="InterPro" id="IPR014009">
    <property type="entry name" value="PIK_FAT"/>
</dbReference>
<dbReference type="InterPro" id="IPR031559">
    <property type="entry name" value="SMG1"/>
</dbReference>
<dbReference type="InterPro" id="IPR035175">
    <property type="entry name" value="SMG1_N"/>
</dbReference>
<dbReference type="InterPro" id="IPR039414">
    <property type="entry name" value="SMG1_PIKKc"/>
</dbReference>
<dbReference type="PANTHER" id="PTHR11139">
    <property type="entry name" value="ATAXIA TELANGIECTASIA MUTATED ATM -RELATED"/>
    <property type="match status" value="1"/>
</dbReference>
<dbReference type="Pfam" id="PF02260">
    <property type="entry name" value="FATC"/>
    <property type="match status" value="1"/>
</dbReference>
<dbReference type="Pfam" id="PF00454">
    <property type="entry name" value="PI3_PI4_kinase"/>
    <property type="match status" value="1"/>
</dbReference>
<dbReference type="Pfam" id="PF15785">
    <property type="entry name" value="SMG1"/>
    <property type="match status" value="1"/>
</dbReference>
<dbReference type="Pfam" id="PF17229">
    <property type="entry name" value="SMG1_N"/>
    <property type="match status" value="1"/>
</dbReference>
<dbReference type="SMART" id="SM01343">
    <property type="entry name" value="FATC"/>
    <property type="match status" value="1"/>
</dbReference>
<dbReference type="SMART" id="SM00146">
    <property type="entry name" value="PI3Kc"/>
    <property type="match status" value="1"/>
</dbReference>
<dbReference type="SMART" id="SM01345">
    <property type="entry name" value="Rapamycin_bind"/>
    <property type="match status" value="1"/>
</dbReference>
<dbReference type="SUPFAM" id="SSF48371">
    <property type="entry name" value="ARM repeat"/>
    <property type="match status" value="2"/>
</dbReference>
<dbReference type="SUPFAM" id="SSF56112">
    <property type="entry name" value="Protein kinase-like (PK-like)"/>
    <property type="match status" value="1"/>
</dbReference>
<dbReference type="PROSITE" id="PS51189">
    <property type="entry name" value="FAT"/>
    <property type="match status" value="1"/>
</dbReference>
<dbReference type="PROSITE" id="PS51190">
    <property type="entry name" value="FATC"/>
    <property type="match status" value="1"/>
</dbReference>
<dbReference type="PROSITE" id="PS00916">
    <property type="entry name" value="PI3_4_KINASE_2"/>
    <property type="match status" value="1"/>
</dbReference>
<dbReference type="PROSITE" id="PS50290">
    <property type="entry name" value="PI3_4_KINASE_3"/>
    <property type="match status" value="1"/>
</dbReference>
<comment type="function">
    <text evidence="6 7 10 11">Serine/threonine protein kinase involved in both mRNA surveillance and genotoxic stress response pathways. Recognizes the substrate consensus sequence [ST]-Q. Plays a central role in nonsense-mediated decay (NMD) of mRNAs containing premature stop codons by phosphorylating UPF1/RENT1. Recruited by release factors to stalled ribosomes together with SMG8 and SMG9 (forming the SMG1C protein kinase complex), and UPF1 to form the transient SURF (SMG1-UPF1-eRF1-eRF3) complex. In EJC-dependent NMD, the SURF complex associates with the exon junction complex (EJC) through UPF2 and allows the formation of an UPF1-UPF2-UPF3 surveillance complex which is believed to activate NMD. Also acts as a genotoxic stress-activated protein kinase that displays some functional overlap with ATM. Can phosphorylate p53/TP53 and is required for optimal p53/TP53 activation after cellular exposure to genotoxic stress. Its depletion leads to spontaneous DNA damage and increased sensitivity to ionizing radiation (IR). May activate PRKCI but not PRKCZ.</text>
</comment>
<comment type="catalytic activity">
    <reaction evidence="13">
        <text>L-seryl-[protein] + ATP = O-phospho-L-seryl-[protein] + ADP + H(+)</text>
        <dbReference type="Rhea" id="RHEA:17989"/>
        <dbReference type="Rhea" id="RHEA-COMP:9863"/>
        <dbReference type="Rhea" id="RHEA-COMP:11604"/>
        <dbReference type="ChEBI" id="CHEBI:15378"/>
        <dbReference type="ChEBI" id="CHEBI:29999"/>
        <dbReference type="ChEBI" id="CHEBI:30616"/>
        <dbReference type="ChEBI" id="CHEBI:83421"/>
        <dbReference type="ChEBI" id="CHEBI:456216"/>
        <dbReference type="EC" id="2.7.11.1"/>
    </reaction>
</comment>
<comment type="catalytic activity">
    <reaction evidence="13">
        <text>L-threonyl-[protein] + ATP = O-phospho-L-threonyl-[protein] + ADP + H(+)</text>
        <dbReference type="Rhea" id="RHEA:46608"/>
        <dbReference type="Rhea" id="RHEA-COMP:11060"/>
        <dbReference type="Rhea" id="RHEA-COMP:11605"/>
        <dbReference type="ChEBI" id="CHEBI:15378"/>
        <dbReference type="ChEBI" id="CHEBI:30013"/>
        <dbReference type="ChEBI" id="CHEBI:30616"/>
        <dbReference type="ChEBI" id="CHEBI:61977"/>
        <dbReference type="ChEBI" id="CHEBI:456216"/>
        <dbReference type="EC" id="2.7.11.1"/>
    </reaction>
</comment>
<comment type="cofactor">
    <cofactor evidence="6">
        <name>Mn(2+)</name>
        <dbReference type="ChEBI" id="CHEBI:29035"/>
    </cofactor>
</comment>
<comment type="activity regulation">
    <text evidence="6 7 10">Inhibited by caffeine, LY294002 and wortmannin.</text>
</comment>
<comment type="subunit">
    <text evidence="7 8 9 11 13 14 15 16 17 18 19 20 21">Component of the SMG1C complex composed of SMG1, SMG8 and SMG9; the recruitment of SMG8 to SMG1 N-terminus induces a large conformational change in the SMG1 C-terminal head domain containing the catalytic domain (PubMed:33205750). Component of the transient SURF (SMG1-UPF1-eRF1-eRF3) complex. Part of a complex composed of SMG1, DHX34 and UPF1; within the complex DHX34 acts as a scaffolding protein to facilitate SMG1 phosphorylation of UPF1 (PubMed:26841701). Interacts with PRKCI. Interacts with TELO2 and TTI1. Interacts with RUVBL1 and RUVBL2 (PubMed:33205750). Interacts with UPF2. Interacts with DHX34 (via C-terminus); the interaction is RNA-independent (PubMed:25220460, PubMed:33205750).</text>
</comment>
<comment type="interaction">
    <interactant intactId="EBI-1049832">
        <id>Q96Q15</id>
    </interactant>
    <interactant intactId="EBI-81531">
        <id>P11940</id>
        <label>PABPC1</label>
    </interactant>
    <organismsDiffer>false</organismsDiffer>
    <experiments>2</experiments>
</comment>
<comment type="interaction">
    <interactant intactId="EBI-1049832">
        <id>Q96Q15</id>
    </interactant>
    <interactant intactId="EBI-372073">
        <id>Q9HAU5</id>
        <label>UPF2</label>
    </interactant>
    <organismsDiffer>false</organismsDiffer>
    <experiments>7</experiments>
</comment>
<comment type="subcellular location">
    <subcellularLocation>
        <location evidence="10">Nucleus</location>
    </subcellularLocation>
    <subcellularLocation>
        <location evidence="10">Cytoplasm</location>
    </subcellularLocation>
    <text evidence="1">Present in the chromatoid body.</text>
</comment>
<comment type="alternative products">
    <event type="alternative splicing"/>
    <isoform>
        <id>Q96Q15-1</id>
        <name>1</name>
        <sequence type="displayed"/>
    </isoform>
    <isoform>
        <id>Q96Q15-2</id>
        <name>2</name>
        <sequence type="described" ref="VSP_017748"/>
    </isoform>
    <isoform>
        <id>Q96Q15-3</id>
        <name>3</name>
        <sequence type="described" ref="VSP_017747"/>
    </isoform>
    <isoform>
        <id>Q96Q15-4</id>
        <name>4</name>
        <name>BLIP</name>
        <sequence type="described" ref="VSP_017746"/>
    </isoform>
</comment>
<comment type="tissue specificity">
    <text evidence="10 21">Widely expressed, with highest level in heart and skeletal muscle. Expressed in placenta, brain, lung and spleen, but not in liver.</text>
</comment>
<comment type="PTM">
    <text evidence="27 28 29">Autophosphorylated.</text>
</comment>
<comment type="miscellaneous">
    <text>This gene is located in a region of chromosome 16 that contains 2 segmental duplications. Other genes that are highly related to this exist, but they probably represent pseudogenes.</text>
</comment>
<comment type="similarity">
    <text evidence="26">Belongs to the PI3/PI4-kinase family.</text>
</comment>
<comment type="sequence caution" evidence="26">
    <conflict type="erroneous initiation">
        <sequence resource="EMBL-CDS" id="AAA86535"/>
    </conflict>
    <text>Truncated N-terminus.</text>
</comment>
<protein>
    <recommendedName>
        <fullName>Serine/threonine-protein kinase SMG1</fullName>
        <shortName>SMG-1</shortName>
        <shortName>hSMG-1</shortName>
        <ecNumber>2.7.11.1</ecNumber>
    </recommendedName>
    <alternativeName>
        <fullName evidence="24">Lambda/iota protein kinase C-interacting protein</fullName>
        <shortName evidence="24">Lambda-interacting protein</shortName>
    </alternativeName>
    <alternativeName>
        <fullName evidence="30">Nonsense mediated mRNA decay-associated PI3K-related kinase SMG1</fullName>
    </alternativeName>
</protein>
<evidence type="ECO:0000250" key="1">
    <source>
        <dbReference type="UniProtKB" id="Q8BKX6"/>
    </source>
</evidence>
<evidence type="ECO:0000255" key="2">
    <source>
        <dbReference type="PROSITE-ProRule" id="PRU00269"/>
    </source>
</evidence>
<evidence type="ECO:0000255" key="3">
    <source>
        <dbReference type="PROSITE-ProRule" id="PRU00534"/>
    </source>
</evidence>
<evidence type="ECO:0000255" key="4">
    <source>
        <dbReference type="PROSITE-ProRule" id="PRU00535"/>
    </source>
</evidence>
<evidence type="ECO:0000256" key="5">
    <source>
        <dbReference type="SAM" id="MobiDB-lite"/>
    </source>
</evidence>
<evidence type="ECO:0000269" key="6">
    <source>
    </source>
</evidence>
<evidence type="ECO:0000269" key="7">
    <source>
    </source>
</evidence>
<evidence type="ECO:0000269" key="8">
    <source>
    </source>
</evidence>
<evidence type="ECO:0000269" key="9">
    <source>
    </source>
</evidence>
<evidence type="ECO:0000269" key="10">
    <source>
    </source>
</evidence>
<evidence type="ECO:0000269" key="11">
    <source>
    </source>
</evidence>
<evidence type="ECO:0000269" key="12">
    <source>
    </source>
</evidence>
<evidence type="ECO:0000269" key="13">
    <source>
    </source>
</evidence>
<evidence type="ECO:0000269" key="14">
    <source>
    </source>
</evidence>
<evidence type="ECO:0000269" key="15">
    <source>
    </source>
</evidence>
<evidence type="ECO:0000269" key="16">
    <source>
    </source>
</evidence>
<evidence type="ECO:0000269" key="17">
    <source>
    </source>
</evidence>
<evidence type="ECO:0000269" key="18">
    <source>
    </source>
</evidence>
<evidence type="ECO:0000269" key="19">
    <source>
    </source>
</evidence>
<evidence type="ECO:0000269" key="20">
    <source>
    </source>
</evidence>
<evidence type="ECO:0000269" key="21">
    <source>
    </source>
</evidence>
<evidence type="ECO:0000303" key="22">
    <source>
    </source>
</evidence>
<evidence type="ECO:0000303" key="23">
    <source>
    </source>
</evidence>
<evidence type="ECO:0000303" key="24">
    <source>
    </source>
</evidence>
<evidence type="ECO:0000303" key="25">
    <source>
    </source>
</evidence>
<evidence type="ECO:0000305" key="26"/>
<evidence type="ECO:0000305" key="27">
    <source>
    </source>
</evidence>
<evidence type="ECO:0000305" key="28">
    <source>
    </source>
</evidence>
<evidence type="ECO:0000305" key="29">
    <source>
    </source>
</evidence>
<evidence type="ECO:0000312" key="30">
    <source>
        <dbReference type="HGNC" id="HGNC:30045"/>
    </source>
</evidence>
<evidence type="ECO:0007744" key="31">
    <source>
    </source>
</evidence>
<evidence type="ECO:0007744" key="32">
    <source>
    </source>
</evidence>
<evidence type="ECO:0007744" key="33">
    <source>
    </source>
</evidence>
<evidence type="ECO:0007744" key="34">
    <source>
    </source>
</evidence>
<evidence type="ECO:0007744" key="35">
    <source>
    </source>
</evidence>
<evidence type="ECO:0007744" key="36">
    <source>
    </source>
</evidence>
<evidence type="ECO:0007829" key="37">
    <source>
        <dbReference type="PDB" id="6L54"/>
    </source>
</evidence>
<evidence type="ECO:0007829" key="38">
    <source>
        <dbReference type="PDB" id="6SYT"/>
    </source>
</evidence>
<evidence type="ECO:0007829" key="39">
    <source>
        <dbReference type="PDB" id="6Z3R"/>
    </source>
</evidence>
<evidence type="ECO:0007829" key="40">
    <source>
        <dbReference type="PDB" id="7PW4"/>
    </source>
</evidence>
<evidence type="ECO:0007829" key="41">
    <source>
        <dbReference type="PDB" id="7PW6"/>
    </source>
</evidence>
<evidence type="ECO:0007829" key="42">
    <source>
        <dbReference type="PDB" id="7PW8"/>
    </source>
</evidence>
<evidence type="ECO:0007829" key="43">
    <source>
        <dbReference type="PDB" id="7PW9"/>
    </source>
</evidence>
<gene>
    <name evidence="30" type="primary">SMG1</name>
    <name evidence="30" type="synonym">ATX</name>
    <name evidence="30" type="synonym">KIAA0421</name>
    <name evidence="30" type="synonym">LIP</name>
</gene>
<reference key="1">
    <citation type="journal article" date="1998" name="Mol. Cell. Biol.">
        <title>Localization of atypical protein kinase C isoforms into lysosome-targeted endosomes through interaction with p62.</title>
        <authorList>
            <person name="Sanchez P."/>
            <person name="De Carcer G."/>
            <person name="Sandoval I.V."/>
            <person name="Moscat J."/>
            <person name="Diaz-Meco M.T."/>
        </authorList>
    </citation>
    <scope>NUCLEOTIDE SEQUENCE [MRNA] (ISOFORM 4)</scope>
</reference>
<reference key="2">
    <citation type="journal article" date="2001" name="Genes Dev.">
        <title>Human SMG-1, a novel phosphatidylinositol 3-kinase-related protein kinase, associates with components of the mRNA surveillance complex and is involved in the regulation of nonsense-mediated mRNA decay.</title>
        <authorList>
            <person name="Yamashita A."/>
            <person name="Ohnishi T."/>
            <person name="Kashima I."/>
            <person name="Taya Y."/>
            <person name="Ohno S."/>
        </authorList>
    </citation>
    <scope>NUCLEOTIDE SEQUENCE [MRNA] (ISOFORM 1)</scope>
    <scope>FUNCTION</scope>
    <scope>PHOSPHORYLATION OF RENT1</scope>
    <scope>ALTERNATIVE SPLICING</scope>
    <scope>ACTIVITY REGULATION</scope>
    <scope>PHOSPHORYLATION</scope>
    <scope>INTERACTION WITH RENT1; UPF2 AND UPF3</scope>
    <scope>MUTAGENESIS OF ASP-2335</scope>
</reference>
<reference key="3">
    <citation type="journal article" date="2001" name="J. Biol. Chem.">
        <title>Cloning of a novel phosphatidylinositol kinase-related kinase: characterization of the human SMG-1 RNA surveillance protein.</title>
        <authorList>
            <person name="Denning G."/>
            <person name="Jamieson L."/>
            <person name="Maquat L.E."/>
            <person name="Thompson E.A."/>
            <person name="Fields A.P."/>
        </authorList>
    </citation>
    <scope>NUCLEOTIDE SEQUENCE [MRNA] (ISOFORM 3)</scope>
    <scope>FUNCTION</scope>
    <scope>PHOSPHORYLATION OF RENT1</scope>
    <scope>COFACTOR</scope>
    <scope>ACTIVITY REGULATION</scope>
    <scope>MUTAGENESIS OF ASP-2335</scope>
</reference>
<reference key="4">
    <citation type="journal article" date="2004" name="Mol. Cell">
        <title>The mRNA surveillance protein hSMG-1 functions in genotoxic stress response pathways in mammalian cells.</title>
        <authorList>
            <person name="Brumbaugh K.M."/>
            <person name="Otterness D.M."/>
            <person name="Geisen C."/>
            <person name="Oliveira V."/>
            <person name="Brognard J."/>
            <person name="Li X."/>
            <person name="Lejeune F."/>
            <person name="Tibbetts R.S."/>
            <person name="Maquat L.E."/>
            <person name="Abraham R.T."/>
        </authorList>
    </citation>
    <scope>NUCLEOTIDE SEQUENCE [MRNA] (ISOFORM 2)</scope>
    <scope>FUNCTION</scope>
    <scope>PHOSPHORYLATION OF TP53</scope>
    <scope>TISSUE SPECIFICITY</scope>
    <scope>SUBCELLULAR LOCATION</scope>
    <scope>ACTIVITY REGULATION</scope>
    <scope>MUTAGENESIS OF ASP-2335</scope>
    <scope>VARIANTS CYS-144 AND LYS-612</scope>
</reference>
<reference key="5">
    <citation type="journal article" date="2004" name="Nature">
        <title>The sequence and analysis of duplication-rich human chromosome 16.</title>
        <authorList>
            <person name="Martin J."/>
            <person name="Han C."/>
            <person name="Gordon L.A."/>
            <person name="Terry A."/>
            <person name="Prabhakar S."/>
            <person name="She X."/>
            <person name="Xie G."/>
            <person name="Hellsten U."/>
            <person name="Chan Y.M."/>
            <person name="Altherr M."/>
            <person name="Couronne O."/>
            <person name="Aerts A."/>
            <person name="Bajorek E."/>
            <person name="Black S."/>
            <person name="Blumer H."/>
            <person name="Branscomb E."/>
            <person name="Brown N.C."/>
            <person name="Bruno W.J."/>
            <person name="Buckingham J.M."/>
            <person name="Callen D.F."/>
            <person name="Campbell C.S."/>
            <person name="Campbell M.L."/>
            <person name="Campbell E.W."/>
            <person name="Caoile C."/>
            <person name="Challacombe J.F."/>
            <person name="Chasteen L.A."/>
            <person name="Chertkov O."/>
            <person name="Chi H.C."/>
            <person name="Christensen M."/>
            <person name="Clark L.M."/>
            <person name="Cohn J.D."/>
            <person name="Denys M."/>
            <person name="Detter J.C."/>
            <person name="Dickson M."/>
            <person name="Dimitrijevic-Bussod M."/>
            <person name="Escobar J."/>
            <person name="Fawcett J.J."/>
            <person name="Flowers D."/>
            <person name="Fotopulos D."/>
            <person name="Glavina T."/>
            <person name="Gomez M."/>
            <person name="Gonzales E."/>
            <person name="Goodstein D."/>
            <person name="Goodwin L.A."/>
            <person name="Grady D.L."/>
            <person name="Grigoriev I."/>
            <person name="Groza M."/>
            <person name="Hammon N."/>
            <person name="Hawkins T."/>
            <person name="Haydu L."/>
            <person name="Hildebrand C.E."/>
            <person name="Huang W."/>
            <person name="Israni S."/>
            <person name="Jett J."/>
            <person name="Jewett P.B."/>
            <person name="Kadner K."/>
            <person name="Kimball H."/>
            <person name="Kobayashi A."/>
            <person name="Krawczyk M.-C."/>
            <person name="Leyba T."/>
            <person name="Longmire J.L."/>
            <person name="Lopez F."/>
            <person name="Lou Y."/>
            <person name="Lowry S."/>
            <person name="Ludeman T."/>
            <person name="Manohar C.F."/>
            <person name="Mark G.A."/>
            <person name="McMurray K.L."/>
            <person name="Meincke L.J."/>
            <person name="Morgan J."/>
            <person name="Moyzis R.K."/>
            <person name="Mundt M.O."/>
            <person name="Munk A.C."/>
            <person name="Nandkeshwar R.D."/>
            <person name="Pitluck S."/>
            <person name="Pollard M."/>
            <person name="Predki P."/>
            <person name="Parson-Quintana B."/>
            <person name="Ramirez L."/>
            <person name="Rash S."/>
            <person name="Retterer J."/>
            <person name="Ricke D.O."/>
            <person name="Robinson D.L."/>
            <person name="Rodriguez A."/>
            <person name="Salamov A."/>
            <person name="Saunders E.H."/>
            <person name="Scott D."/>
            <person name="Shough T."/>
            <person name="Stallings R.L."/>
            <person name="Stalvey M."/>
            <person name="Sutherland R.D."/>
            <person name="Tapia R."/>
            <person name="Tesmer J.G."/>
            <person name="Thayer N."/>
            <person name="Thompson L.S."/>
            <person name="Tice H."/>
            <person name="Torney D.C."/>
            <person name="Tran-Gyamfi M."/>
            <person name="Tsai M."/>
            <person name="Ulanovsky L.E."/>
            <person name="Ustaszewska A."/>
            <person name="Vo N."/>
            <person name="White P.S."/>
            <person name="Williams A.L."/>
            <person name="Wills P.L."/>
            <person name="Wu J.-R."/>
            <person name="Wu K."/>
            <person name="Yang J."/>
            <person name="DeJong P."/>
            <person name="Bruce D."/>
            <person name="Doggett N.A."/>
            <person name="Deaven L."/>
            <person name="Schmutz J."/>
            <person name="Grimwood J."/>
            <person name="Richardson P."/>
            <person name="Rokhsar D.S."/>
            <person name="Eichler E.E."/>
            <person name="Gilna P."/>
            <person name="Lucas S.M."/>
            <person name="Myers R.M."/>
            <person name="Rubin E.M."/>
            <person name="Pennacchio L.A."/>
        </authorList>
    </citation>
    <scope>NUCLEOTIDE SEQUENCE [LARGE SCALE GENOMIC DNA]</scope>
</reference>
<reference key="6">
    <citation type="journal article" date="1997" name="DNA Res.">
        <title>Prediction of the coding sequences of unidentified human genes. VIII. 78 new cDNA clones from brain which code for large proteins in vitro.</title>
        <authorList>
            <person name="Ishikawa K."/>
            <person name="Nagase T."/>
            <person name="Nakajima D."/>
            <person name="Seki N."/>
            <person name="Ohira M."/>
            <person name="Miyajima N."/>
            <person name="Tanaka A."/>
            <person name="Kotani H."/>
            <person name="Nomura N."/>
            <person name="Ohara O."/>
        </authorList>
    </citation>
    <scope>NUCLEOTIDE SEQUENCE [LARGE SCALE MRNA] OF 1674-3661</scope>
    <source>
        <tissue>Brain</tissue>
    </source>
</reference>
<reference key="7">
    <citation type="journal article" date="2002" name="DNA Res.">
        <title>Construction of expression-ready cDNA clones for KIAA genes: manual curation of 330 KIAA cDNA clones.</title>
        <authorList>
            <person name="Nakajima D."/>
            <person name="Okazaki N."/>
            <person name="Yamakawa H."/>
            <person name="Kikuno R."/>
            <person name="Ohara O."/>
            <person name="Nagase T."/>
        </authorList>
    </citation>
    <scope>SEQUENCE REVISION</scope>
</reference>
<reference key="8">
    <citation type="journal article" date="1996" name="Mol. Cell. Biol.">
        <title>Lambda-interacting protein, a novel protein that specifically interacts with the zinc finger domain of the atypical protein kinase C isotype lambda/iota and stimulates its kinase activity in vitro and in vivo.</title>
        <authorList>
            <person name="Diaz-Meco M.T."/>
            <person name="Municio M.M."/>
            <person name="Sanchez P."/>
            <person name="Lozano J."/>
            <person name="Moscat J."/>
        </authorList>
    </citation>
    <scope>NUCLEOTIDE SEQUENCE [MRNA] OF 2878-3661</scope>
    <scope>TISSUE SPECIFICITY</scope>
    <scope>INTERACTION WITH PRKCI</scope>
</reference>
<reference key="9">
    <citation type="journal article" date="2001" name="J. Hered.">
        <title>Divergent origins and concerted expansion of two segmental duplications on chromosome 16.</title>
        <authorList>
            <person name="Eichler E.E."/>
            <person name="Johnson M.E."/>
            <person name="Alkan C."/>
            <person name="Tuzun E."/>
            <person name="Sahinalp C."/>
            <person name="Misceo D."/>
            <person name="Archidiacono N."/>
            <person name="Rocchi M."/>
        </authorList>
    </citation>
    <scope>DUPLICATION</scope>
</reference>
<reference key="10">
    <citation type="journal article" date="2003" name="Mol. Cell">
        <title>Phosphorylation of hUPF1 induces formation of mRNA surveillance complexes containing hSMG-5 and hSMG-7.</title>
        <authorList>
            <person name="Ohnishi T."/>
            <person name="Yamashita A."/>
            <person name="Kashima I."/>
            <person name="Schell T."/>
            <person name="Anders K.R."/>
            <person name="Grimson A."/>
            <person name="Hachiya T."/>
            <person name="Hentze M.W."/>
            <person name="Anderson P."/>
            <person name="Ohno S."/>
        </authorList>
    </citation>
    <scope>INTERACTION WITH SMG5</scope>
</reference>
<reference key="11">
    <citation type="journal article" date="2003" name="RNA">
        <title>Characterization of human Smg5/7a: a protein with similarities to Caenorhabditis elegans SMG5 and SMG7 that functions in the dephosphorylation of Upf1.</title>
        <authorList>
            <person name="Chiu S.-Y."/>
            <person name="Serin G."/>
            <person name="Ohara O."/>
            <person name="Maquat L.E."/>
        </authorList>
    </citation>
    <scope>INTERACTION WITH RENT1; UPF2; EST1A AND UPF3B</scope>
</reference>
<reference key="12">
    <citation type="journal article" date="2006" name="Genes Dev.">
        <title>Binding of a novel SMG-1-Upf1-eRF1-eRF3 complex (SURF) to the exon junction complex triggers Upf1 phosphorylation and nonsense-mediated mRNA decay.</title>
        <authorList>
            <person name="Kashima I."/>
            <person name="Yamashita A."/>
            <person name="Izumi N."/>
            <person name="Kataoka N."/>
            <person name="Morishita R."/>
            <person name="Hoshino S."/>
            <person name="Ohno M."/>
            <person name="Dreyfuss G."/>
            <person name="Ohno S."/>
        </authorList>
    </citation>
    <scope>FUNCTION</scope>
    <scope>INTERACTION WITH UPF2</scope>
    <scope>IDENTIFICATION IN THE SURF COMPLEX</scope>
</reference>
<reference key="13">
    <citation type="journal article" date="2006" name="Nat. Biotechnol.">
        <title>A probability-based approach for high-throughput protein phosphorylation analysis and site localization.</title>
        <authorList>
            <person name="Beausoleil S.A."/>
            <person name="Villen J."/>
            <person name="Gerber S.A."/>
            <person name="Rush J."/>
            <person name="Gygi S.P."/>
        </authorList>
    </citation>
    <scope>IDENTIFICATION BY MASS SPECTROMETRY [LARGE SCALE ANALYSIS]</scope>
    <source>
        <tissue>Cervix carcinoma</tissue>
    </source>
</reference>
<reference key="14">
    <citation type="journal article" date="2007" name="Science">
        <title>ATM and ATR substrate analysis reveals extensive protein networks responsive to DNA damage.</title>
        <authorList>
            <person name="Matsuoka S."/>
            <person name="Ballif B.A."/>
            <person name="Smogorzewska A."/>
            <person name="McDonald E.R. III"/>
            <person name="Hurov K.E."/>
            <person name="Luo J."/>
            <person name="Bakalarski C.E."/>
            <person name="Zhao Z."/>
            <person name="Solimini N."/>
            <person name="Lerenthal Y."/>
            <person name="Shiloh Y."/>
            <person name="Gygi S.P."/>
            <person name="Elledge S.J."/>
        </authorList>
    </citation>
    <scope>PHOSPHORYLATION [LARGE SCALE ANALYSIS] AT THR-3550 AND SER-3556</scope>
    <scope>IDENTIFICATION BY MASS SPECTROMETRY [LARGE SCALE ANALYSIS]</scope>
    <source>
        <tissue>Embryonic kidney</tissue>
    </source>
</reference>
<reference key="15">
    <citation type="journal article" date="2008" name="Proc. Natl. Acad. Sci. U.S.A.">
        <title>A quantitative atlas of mitotic phosphorylation.</title>
        <authorList>
            <person name="Dephoure N."/>
            <person name="Zhou C."/>
            <person name="Villen J."/>
            <person name="Beausoleil S.A."/>
            <person name="Bakalarski C.E."/>
            <person name="Elledge S.J."/>
            <person name="Gygi S.P."/>
        </authorList>
    </citation>
    <scope>PHOSPHORYLATION [LARGE SCALE ANALYSIS] AT SER-3570</scope>
    <scope>IDENTIFICATION BY MASS SPECTROMETRY [LARGE SCALE ANALYSIS]</scope>
    <source>
        <tissue>Cervix carcinoma</tissue>
    </source>
</reference>
<reference key="16">
    <citation type="journal article" date="2009" name="Anal. Chem.">
        <title>Lys-N and trypsin cover complementary parts of the phosphoproteome in a refined SCX-based approach.</title>
        <authorList>
            <person name="Gauci S."/>
            <person name="Helbig A.O."/>
            <person name="Slijper M."/>
            <person name="Krijgsveld J."/>
            <person name="Heck A.J."/>
            <person name="Mohammed S."/>
        </authorList>
    </citation>
    <scope>IDENTIFICATION BY MASS SPECTROMETRY [LARGE SCALE ANALYSIS]</scope>
</reference>
<reference key="17">
    <citation type="journal article" date="2009" name="Genes Dev.">
        <title>SMG-8 and SMG-9, two novel subunits of the SMG-1 complex, regulate remodeling of the mRNA surveillance complex during nonsense-mediated mRNA decay.</title>
        <authorList>
            <person name="Yamashita A."/>
            <person name="Izumi N."/>
            <person name="Kashima I."/>
            <person name="Ohnishi T."/>
            <person name="Saari B."/>
            <person name="Katsuhata Y."/>
            <person name="Muramatsu R."/>
            <person name="Morita T."/>
            <person name="Iwamatsu A."/>
            <person name="Hachiya T."/>
            <person name="Kurata R."/>
            <person name="Hirano H."/>
            <person name="Anderson P."/>
            <person name="Ohno S."/>
        </authorList>
    </citation>
    <scope>CATALYTIC ACTIVITY</scope>
    <scope>IDENTIFICATION IN THE SMG1C COMPLEX</scope>
</reference>
<reference key="18">
    <citation type="journal article" date="2009" name="Sci. Signal.">
        <title>Quantitative phosphoproteomic analysis of T cell receptor signaling reveals system-wide modulation of protein-protein interactions.</title>
        <authorList>
            <person name="Mayya V."/>
            <person name="Lundgren D.H."/>
            <person name="Hwang S.-I."/>
            <person name="Rezaul K."/>
            <person name="Wu L."/>
            <person name="Eng J.K."/>
            <person name="Rodionov V."/>
            <person name="Han D.K."/>
        </authorList>
    </citation>
    <scope>IDENTIFICATION BY MASS SPECTROMETRY [LARGE SCALE ANALYSIS]</scope>
    <source>
        <tissue>Leukemic T-cell</tissue>
    </source>
</reference>
<reference key="19">
    <citation type="journal article" date="2009" name="Science">
        <title>Lysine acetylation targets protein complexes and co-regulates major cellular functions.</title>
        <authorList>
            <person name="Choudhary C."/>
            <person name="Kumar C."/>
            <person name="Gnad F."/>
            <person name="Nielsen M.L."/>
            <person name="Rehman M."/>
            <person name="Walther T.C."/>
            <person name="Olsen J.V."/>
            <person name="Mann M."/>
        </authorList>
    </citation>
    <scope>ACETYLATION [LARGE SCALE ANALYSIS] AT LYS-173</scope>
    <scope>IDENTIFICATION BY MASS SPECTROMETRY [LARGE SCALE ANALYSIS]</scope>
</reference>
<reference key="20">
    <citation type="journal article" date="2010" name="J. Biol. Chem.">
        <title>Tti1 and Tel2 are critical factors in mammalian target of rapamycin complex assembly.</title>
        <authorList>
            <person name="Kaizuka T."/>
            <person name="Hara T."/>
            <person name="Oshiro N."/>
            <person name="Kikkawa U."/>
            <person name="Yonezawa K."/>
            <person name="Takehana K."/>
            <person name="Iemura S."/>
            <person name="Natsume T."/>
            <person name="Mizushima N."/>
        </authorList>
    </citation>
    <scope>INTERACTION WITH TELO2 AND TTI1</scope>
</reference>
<reference key="21">
    <citation type="journal article" date="2010" name="Genes Dev.">
        <title>A genetic screen identifies the Triple T complex required for DNA damage signaling and ATM and ATR stability.</title>
        <authorList>
            <person name="Hurov K.E."/>
            <person name="Cotta-Ramusino C."/>
            <person name="Elledge S.J."/>
        </authorList>
    </citation>
    <scope>INTERACTION WITH TTI1</scope>
</reference>
<reference key="22">
    <citation type="journal article" date="2010" name="Sci. Signal.">
        <title>AAA+ proteins RUVBL1 and RUVBL2 coordinate PIKK activity and function in nonsense-mediated mRNA decay.</title>
        <authorList>
            <person name="Izumi N."/>
            <person name="Yamashita A."/>
            <person name="Iwamatsu A."/>
            <person name="Kurata R."/>
            <person name="Nakamura H."/>
            <person name="Saari B."/>
            <person name="Hirano H."/>
            <person name="Anderson P."/>
            <person name="Ohno S."/>
        </authorList>
    </citation>
    <scope>INTERACTION WITH RUVBL1 AND RUVBL2</scope>
</reference>
<reference key="23">
    <citation type="journal article" date="2010" name="Sci. Signal.">
        <title>Quantitative phosphoproteomics reveals widespread full phosphorylation site occupancy during mitosis.</title>
        <authorList>
            <person name="Olsen J.V."/>
            <person name="Vermeulen M."/>
            <person name="Santamaria A."/>
            <person name="Kumar C."/>
            <person name="Miller M.L."/>
            <person name="Jensen L.J."/>
            <person name="Gnad F."/>
            <person name="Cox J."/>
            <person name="Jensen T.S."/>
            <person name="Nigg E.A."/>
            <person name="Brunak S."/>
            <person name="Mann M."/>
        </authorList>
    </citation>
    <scope>PHOSPHORYLATION [LARGE SCALE ANALYSIS] AT THR-3573</scope>
    <scope>IDENTIFICATION BY MASS SPECTROMETRY [LARGE SCALE ANALYSIS]</scope>
    <source>
        <tissue>Cervix carcinoma</tissue>
    </source>
</reference>
<reference key="24">
    <citation type="journal article" date="2011" name="BMC Syst. Biol.">
        <title>Initial characterization of the human central proteome.</title>
        <authorList>
            <person name="Burkard T.R."/>
            <person name="Planyavsky M."/>
            <person name="Kaupe I."/>
            <person name="Breitwieser F.P."/>
            <person name="Buerckstuemmer T."/>
            <person name="Bennett K.L."/>
            <person name="Superti-Furga G."/>
            <person name="Colinge J."/>
        </authorList>
    </citation>
    <scope>IDENTIFICATION BY MASS SPECTROMETRY [LARGE SCALE ANALYSIS]</scope>
</reference>
<reference key="25">
    <citation type="journal article" date="2011" name="Genes Dev.">
        <title>The nonsense-mediated mRNA decay SMG-1 kinase is regulated by large-scale conformational changes controlled by SMG-8.</title>
        <authorList>
            <person name="Arias-Palomo E."/>
            <person name="Yamashita A."/>
            <person name="Fernandez I.S."/>
            <person name="Nunez-Ramirez R."/>
            <person name="Bamba Y."/>
            <person name="Izumi N."/>
            <person name="Ohno S."/>
            <person name="Llorca O."/>
        </authorList>
    </citation>
    <scope>INTERACTION WITH SMG8 AND SMG9</scope>
    <scope>ELECTRON MICROSCOPY OF THE SMG1C COMPLEX</scope>
</reference>
<reference key="26">
    <citation type="journal article" date="2011" name="Sci. Signal.">
        <title>System-wide temporal characterization of the proteome and phosphoproteome of human embryonic stem cell differentiation.</title>
        <authorList>
            <person name="Rigbolt K.T."/>
            <person name="Prokhorova T.A."/>
            <person name="Akimov V."/>
            <person name="Henningsen J."/>
            <person name="Johansen P.T."/>
            <person name="Kratchmarova I."/>
            <person name="Kassem M."/>
            <person name="Mann M."/>
            <person name="Olsen J.V."/>
            <person name="Blagoev B."/>
        </authorList>
    </citation>
    <scope>IDENTIFICATION BY MASS SPECTROMETRY [LARGE SCALE ANALYSIS]</scope>
</reference>
<reference key="27">
    <citation type="journal article" date="2013" name="J. Proteome Res.">
        <title>Toward a comprehensive characterization of a human cancer cell phosphoproteome.</title>
        <authorList>
            <person name="Zhou H."/>
            <person name="Di Palma S."/>
            <person name="Preisinger C."/>
            <person name="Peng M."/>
            <person name="Polat A.N."/>
            <person name="Heck A.J."/>
            <person name="Mohammed S."/>
        </authorList>
    </citation>
    <scope>PHOSPHORYLATION [LARGE SCALE ANALYSIS] AT THR-3550; SER-3556; SER-3570 AND THR-3573</scope>
    <scope>IDENTIFICATION BY MASS SPECTROMETRY [LARGE SCALE ANALYSIS]</scope>
    <source>
        <tissue>Cervix carcinoma</tissue>
        <tissue>Erythroleukemia</tissue>
    </source>
</reference>
<reference key="28">
    <citation type="journal article" date="2014" name="Cell Rep.">
        <title>The RNA helicase DHX34 activates NMD by promoting a transition from the surveillance to the decay-inducing complex.</title>
        <authorList>
            <person name="Hug N."/>
            <person name="Caceres J.F."/>
        </authorList>
    </citation>
    <scope>INTERACTION WITH DHX34</scope>
</reference>
<reference key="29">
    <citation type="journal article" date="2014" name="J. Proteomics">
        <title>An enzyme assisted RP-RPLC approach for in-depth analysis of human liver phosphoproteome.</title>
        <authorList>
            <person name="Bian Y."/>
            <person name="Song C."/>
            <person name="Cheng K."/>
            <person name="Dong M."/>
            <person name="Wang F."/>
            <person name="Huang J."/>
            <person name="Sun D."/>
            <person name="Wang L."/>
            <person name="Ye M."/>
            <person name="Zou H."/>
        </authorList>
    </citation>
    <scope>PHOSPHORYLATION [LARGE SCALE ANALYSIS] AT THR-3573</scope>
    <scope>IDENTIFICATION BY MASS SPECTROMETRY [LARGE SCALE ANALYSIS]</scope>
    <source>
        <tissue>Liver</tissue>
    </source>
</reference>
<reference key="30">
    <citation type="journal article" date="2016" name="Nat. Commun.">
        <title>The RNA helicase DHX34 functions as a scaffold for SMG1-mediated UPF1 phosphorylation.</title>
        <authorList>
            <person name="Melero R."/>
            <person name="Hug N."/>
            <person name="Lopez-Perrote A."/>
            <person name="Yamashita A."/>
            <person name="Caceres J.F."/>
            <person name="Llorca O."/>
        </authorList>
    </citation>
    <scope>IDENTIFICATION IN A COMPLEX WITH DHX34 AND UPF1</scope>
    <scope>INTERACTION WITH DHX34 AND UPF1</scope>
</reference>
<reference key="31">
    <citation type="journal article" date="2020" name="Elife">
        <title>Regulation of RUVBL1-RUVBL2 AAA-ATPases by the nonsense-mediated mRNA decay factor DHX34, as evidenced by Cryo-EM.</title>
        <authorList>
            <person name="Lopez-Perrote A."/>
            <person name="Hug N."/>
            <person name="Gonzalez-Corpas A."/>
            <person name="Rodriguez C.F."/>
            <person name="Serna M."/>
            <person name="Garcia-Martin C."/>
            <person name="Boskovic J."/>
            <person name="Fernandez-Leiro R."/>
            <person name="Caceres J.F."/>
            <person name="Llorca O."/>
        </authorList>
    </citation>
    <scope>INTERACTION WITH RUVBL1; RUVBL2; SMG8 AND SMG9</scope>
</reference>
<reference key="32">
    <citation type="journal article" date="2007" name="Nature">
        <title>Patterns of somatic mutation in human cancer genomes.</title>
        <authorList>
            <person name="Greenman C."/>
            <person name="Stephens P."/>
            <person name="Smith R."/>
            <person name="Dalgliesh G.L."/>
            <person name="Hunter C."/>
            <person name="Bignell G."/>
            <person name="Davies H."/>
            <person name="Teague J."/>
            <person name="Butler A."/>
            <person name="Stevens C."/>
            <person name="Edkins S."/>
            <person name="O'Meara S."/>
            <person name="Vastrik I."/>
            <person name="Schmidt E.E."/>
            <person name="Avis T."/>
            <person name="Barthorpe S."/>
            <person name="Bhamra G."/>
            <person name="Buck G."/>
            <person name="Choudhury B."/>
            <person name="Clements J."/>
            <person name="Cole J."/>
            <person name="Dicks E."/>
            <person name="Forbes S."/>
            <person name="Gray K."/>
            <person name="Halliday K."/>
            <person name="Harrison R."/>
            <person name="Hills K."/>
            <person name="Hinton J."/>
            <person name="Jenkinson A."/>
            <person name="Jones D."/>
            <person name="Menzies A."/>
            <person name="Mironenko T."/>
            <person name="Perry J."/>
            <person name="Raine K."/>
            <person name="Richardson D."/>
            <person name="Shepherd R."/>
            <person name="Small A."/>
            <person name="Tofts C."/>
            <person name="Varian J."/>
            <person name="Webb T."/>
            <person name="West S."/>
            <person name="Widaa S."/>
            <person name="Yates A."/>
            <person name="Cahill D.P."/>
            <person name="Louis D.N."/>
            <person name="Goldstraw P."/>
            <person name="Nicholson A.G."/>
            <person name="Brasseur F."/>
            <person name="Looijenga L."/>
            <person name="Weber B.L."/>
            <person name="Chiew Y.-E."/>
            <person name="DeFazio A."/>
            <person name="Greaves M.F."/>
            <person name="Green A.R."/>
            <person name="Campbell P."/>
            <person name="Birney E."/>
            <person name="Easton D.F."/>
            <person name="Chenevix-Trench G."/>
            <person name="Tan M.-H."/>
            <person name="Khoo S.K."/>
            <person name="Teh B.T."/>
            <person name="Yuen S.T."/>
            <person name="Leung S.Y."/>
            <person name="Wooster R."/>
            <person name="Futreal P.A."/>
            <person name="Stratton M.R."/>
        </authorList>
    </citation>
    <scope>VARIANTS [LARGE SCALE ANALYSIS] THR-35; CYS-126; CYS-144; TYR-151; ASN-160; VAL-167; GLY-320; SER-465; ARG-546; SER-588; LYS-612; CYS-753; CYS-809; CYS-812; ILE-829; ASP-832; GLY-952; SER-969; LEU-1016; GLN-1029; SER-1072; HIS-1103; ARG-1275; PRO-1292; VAL-1332; PRO-1358; THR-1418; CYS-2171; SER-2258; LYS-2345; GLU-2730; SER-2889; ALA-2899; THR-3239 AND GLN-3583</scope>
</reference>
<keyword id="KW-0002">3D-structure</keyword>
<keyword id="KW-0007">Acetylation</keyword>
<keyword id="KW-0025">Alternative splicing</keyword>
<keyword id="KW-0067">ATP-binding</keyword>
<keyword id="KW-0963">Cytoplasm</keyword>
<keyword id="KW-0227">DNA damage</keyword>
<keyword id="KW-0234">DNA repair</keyword>
<keyword id="KW-0418">Kinase</keyword>
<keyword id="KW-0464">Manganese</keyword>
<keyword id="KW-0479">Metal-binding</keyword>
<keyword id="KW-0866">Nonsense-mediated mRNA decay</keyword>
<keyword id="KW-0547">Nucleotide-binding</keyword>
<keyword id="KW-0539">Nucleus</keyword>
<keyword id="KW-0597">Phosphoprotein</keyword>
<keyword id="KW-1267">Proteomics identification</keyword>
<keyword id="KW-1185">Reference proteome</keyword>
<keyword id="KW-0723">Serine/threonine-protein kinase</keyword>
<keyword id="KW-0808">Transferase</keyword>
<name>SMG1_HUMAN</name>
<accession>Q96Q15</accession>
<accession>O43305</accession>
<accession>Q13284</accession>
<accession>Q8NFX2</accession>
<accession>Q96QV0</accession>
<accession>Q96RW3</accession>
<proteinExistence type="evidence at protein level"/>
<feature type="chain" id="PRO_0000229791" description="Serine/threonine-protein kinase SMG1">
    <location>
        <begin position="1"/>
        <end position="3661"/>
    </location>
</feature>
<feature type="domain" description="FAT" evidence="3">
    <location>
        <begin position="1283"/>
        <end position="1866"/>
    </location>
</feature>
<feature type="repeat" description="HEAT">
    <location>
        <begin position="1817"/>
        <end position="1852"/>
    </location>
</feature>
<feature type="domain" description="PI3K/PI4K catalytic" evidence="2">
    <location>
        <begin position="2124"/>
        <end position="2463"/>
    </location>
</feature>
<feature type="domain" description="FATC" evidence="3 4">
    <location>
        <begin position="3629"/>
        <end position="3661"/>
    </location>
</feature>
<feature type="region of interest" description="Interaction with SMG8 and SMG9" evidence="17">
    <location>
        <begin position="1"/>
        <end position="1977"/>
    </location>
</feature>
<feature type="region of interest" description="Disordered" evidence="5">
    <location>
        <begin position="1"/>
        <end position="101"/>
    </location>
</feature>
<feature type="region of interest" description="Disordered" evidence="5">
    <location>
        <begin position="116"/>
        <end position="144"/>
    </location>
</feature>
<feature type="region of interest" description="Disordered" evidence="5">
    <location>
        <begin position="1154"/>
        <end position="1175"/>
    </location>
</feature>
<feature type="region of interest" description="Disordered" evidence="5">
    <location>
        <begin position="1898"/>
        <end position="1919"/>
    </location>
</feature>
<feature type="region of interest" description="G-loop" evidence="2">
    <location>
        <begin position="2130"/>
        <end position="2136"/>
    </location>
</feature>
<feature type="region of interest" description="Catalytic loop" evidence="2">
    <location>
        <begin position="2332"/>
        <end position="2340"/>
    </location>
</feature>
<feature type="region of interest" description="Activation loop" evidence="2">
    <location>
        <begin position="2352"/>
        <end position="2376"/>
    </location>
</feature>
<feature type="region of interest" description="Disordered" evidence="5">
    <location>
        <begin position="3568"/>
        <end position="3591"/>
    </location>
</feature>
<feature type="compositionally biased region" description="Low complexity" evidence="5">
    <location>
        <begin position="1"/>
        <end position="11"/>
    </location>
</feature>
<feature type="compositionally biased region" description="Polar residues" evidence="5">
    <location>
        <begin position="26"/>
        <end position="35"/>
    </location>
</feature>
<feature type="compositionally biased region" description="Basic and acidic residues" evidence="5">
    <location>
        <begin position="69"/>
        <end position="86"/>
    </location>
</feature>
<feature type="compositionally biased region" description="Basic and acidic residues" evidence="5">
    <location>
        <begin position="129"/>
        <end position="138"/>
    </location>
</feature>
<feature type="compositionally biased region" description="Polar residues" evidence="5">
    <location>
        <begin position="1154"/>
        <end position="1165"/>
    </location>
</feature>
<feature type="compositionally biased region" description="Polar residues" evidence="5">
    <location>
        <begin position="3568"/>
        <end position="3579"/>
    </location>
</feature>
<feature type="modified residue" description="N6-acetyllysine" evidence="33">
    <location>
        <position position="173"/>
    </location>
</feature>
<feature type="modified residue" description="Phosphothreonine" evidence="31 35">
    <location>
        <position position="3550"/>
    </location>
</feature>
<feature type="modified residue" description="Phosphoserine" evidence="31 35">
    <location>
        <position position="3556"/>
    </location>
</feature>
<feature type="modified residue" description="Phosphoserine" evidence="32 35">
    <location>
        <position position="3570"/>
    </location>
</feature>
<feature type="modified residue" description="Phosphothreonine" evidence="34 35 36">
    <location>
        <position position="3573"/>
    </location>
</feature>
<feature type="modified residue" description="Phosphothreonine" evidence="1">
    <location>
        <position position="3577"/>
    </location>
</feature>
<feature type="splice variant" id="VSP_017746" description="In isoform 4." evidence="25">
    <location>
        <begin position="1"/>
        <end position="1269"/>
    </location>
</feature>
<feature type="splice variant" id="VSP_017747" description="In isoform 3." evidence="22">
    <location>
        <begin position="1"/>
        <end position="630"/>
    </location>
</feature>
<feature type="splice variant" id="VSP_017748" description="In isoform 2." evidence="23">
    <location>
        <begin position="1"/>
        <end position="140"/>
    </location>
</feature>
<feature type="sequence variant" id="VAR_041623" description="In dbSNP:rs12051350." evidence="12">
    <original>A</original>
    <variation>T</variation>
    <location>
        <position position="35"/>
    </location>
</feature>
<feature type="sequence variant" id="VAR_041624" description="In dbSNP:rs752796432." evidence="12">
    <original>R</original>
    <variation>C</variation>
    <location>
        <position position="126"/>
    </location>
</feature>
<feature type="sequence variant" id="VAR_041625" description="In dbSNP:rs766737607." evidence="10 12">
    <original>S</original>
    <variation>C</variation>
    <location>
        <position position="144"/>
    </location>
</feature>
<feature type="sequence variant" id="VAR_041626" description="In dbSNP:rs750788715." evidence="12">
    <original>N</original>
    <variation>Y</variation>
    <location>
        <position position="151"/>
    </location>
</feature>
<feature type="sequence variant" id="VAR_041627" evidence="12">
    <original>D</original>
    <variation>N</variation>
    <location>
        <position position="160"/>
    </location>
</feature>
<feature type="sequence variant" id="VAR_041628" description="In dbSNP:rs1382468496." evidence="12">
    <original>A</original>
    <variation>V</variation>
    <location>
        <position position="167"/>
    </location>
</feature>
<feature type="sequence variant" id="VAR_041629" evidence="12">
    <original>D</original>
    <variation>G</variation>
    <location>
        <position position="320"/>
    </location>
</feature>
<feature type="sequence variant" id="VAR_041630" description="In dbSNP:rs200419100." evidence="12">
    <original>G</original>
    <variation>S</variation>
    <location>
        <position position="465"/>
    </location>
</feature>
<feature type="sequence variant" id="VAR_041631" description="In dbSNP:rs376234691." evidence="12">
    <original>H</original>
    <variation>R</variation>
    <location>
        <position position="546"/>
    </location>
</feature>
<feature type="sequence variant" id="VAR_041632" description="In dbSNP:rs750840136." evidence="12">
    <original>A</original>
    <variation>S</variation>
    <location>
        <position position="588"/>
    </location>
</feature>
<feature type="sequence variant" id="VAR_041633" description="In dbSNP:rs17842615." evidence="10 12">
    <original>I</original>
    <variation>K</variation>
    <location>
        <position position="612"/>
    </location>
</feature>
<feature type="sequence variant" id="VAR_041634" description="In dbSNP:rs569679854." evidence="12">
    <original>S</original>
    <variation>C</variation>
    <location>
        <position position="753"/>
    </location>
</feature>
<feature type="sequence variant" id="VAR_041635" description="In dbSNP:rs919788709." evidence="12">
    <original>S</original>
    <variation>C</variation>
    <location>
        <position position="809"/>
    </location>
</feature>
<feature type="sequence variant" id="VAR_041636" description="In dbSNP:rs1233400465." evidence="12">
    <original>R</original>
    <variation>C</variation>
    <location>
        <position position="812"/>
    </location>
</feature>
<feature type="sequence variant" id="VAR_041637" evidence="12">
    <original>V</original>
    <variation>I</variation>
    <location>
        <position position="829"/>
    </location>
</feature>
<feature type="sequence variant" id="VAR_041638" description="In dbSNP:rs80176913." evidence="12">
    <original>N</original>
    <variation>D</variation>
    <location>
        <position position="832"/>
    </location>
</feature>
<feature type="sequence variant" id="VAR_041639" description="In dbSNP:rs555078480." evidence="12">
    <original>A</original>
    <variation>G</variation>
    <location>
        <position position="952"/>
    </location>
</feature>
<feature type="sequence variant" id="VAR_041640" description="In dbSNP:rs1412788971." evidence="12">
    <original>N</original>
    <variation>S</variation>
    <location>
        <position position="969"/>
    </location>
</feature>
<feature type="sequence variant" id="VAR_041641" description="In dbSNP:rs1394431566." evidence="12">
    <original>F</original>
    <variation>L</variation>
    <location>
        <position position="1016"/>
    </location>
</feature>
<feature type="sequence variant" id="VAR_041642" evidence="12">
    <original>R</original>
    <variation>Q</variation>
    <location>
        <position position="1029"/>
    </location>
</feature>
<feature type="sequence variant" id="VAR_041643" description="In dbSNP:rs45516593." evidence="12">
    <original>T</original>
    <variation>S</variation>
    <location>
        <position position="1072"/>
    </location>
</feature>
<feature type="sequence variant" id="VAR_041644" description="In dbSNP:rs563883658." evidence="12">
    <original>N</original>
    <variation>H</variation>
    <location>
        <position position="1103"/>
    </location>
</feature>
<feature type="sequence variant" id="VAR_041645" evidence="12">
    <original>P</original>
    <variation>R</variation>
    <location>
        <position position="1275"/>
    </location>
</feature>
<feature type="sequence variant" id="VAR_041646" description="In dbSNP:rs375411122." evidence="12">
    <original>Q</original>
    <variation>P</variation>
    <location>
        <position position="1292"/>
    </location>
</feature>
<feature type="sequence variant" id="VAR_041647" description="In dbSNP:rs949474935." evidence="12">
    <original>I</original>
    <variation>V</variation>
    <location>
        <position position="1332"/>
    </location>
</feature>
<feature type="sequence variant" id="VAR_041648" evidence="12">
    <original>S</original>
    <variation>P</variation>
    <location>
        <position position="1358"/>
    </location>
</feature>
<feature type="sequence variant" id="VAR_041649" description="In dbSNP:rs17731779." evidence="12">
    <original>R</original>
    <variation>T</variation>
    <location>
        <position position="1418"/>
    </location>
</feature>
<feature type="sequence variant" id="VAR_041650" description="In a breast pleomorphic lobular carcinoma sample; somatic mutation." evidence="12">
    <original>S</original>
    <variation>C</variation>
    <location>
        <position position="2171"/>
    </location>
</feature>
<feature type="sequence variant" id="VAR_041651" description="In dbSNP:rs35572280." evidence="12">
    <original>G</original>
    <variation>S</variation>
    <location>
        <position position="2258"/>
    </location>
</feature>
<feature type="sequence variant" id="VAR_041652" description="In dbSNP:rs56276814." evidence="12">
    <original>M</original>
    <variation>K</variation>
    <location>
        <position position="2345"/>
    </location>
</feature>
<feature type="sequence variant" id="VAR_041653" description="In dbSNP:rs34960798." evidence="12">
    <original>Q</original>
    <variation>E</variation>
    <location>
        <position position="2730"/>
    </location>
</feature>
<feature type="sequence variant" id="VAR_041654" description="In dbSNP:rs35952340." evidence="12">
    <original>G</original>
    <variation>S</variation>
    <location>
        <position position="2889"/>
    </location>
</feature>
<feature type="sequence variant" id="VAR_041655" description="In dbSNP:rs55782217." evidence="12">
    <original>P</original>
    <variation>A</variation>
    <location>
        <position position="2899"/>
    </location>
</feature>
<feature type="sequence variant" id="VAR_041656" description="In a breast infiltrating ductal carcinoma sample; somatic mutation; dbSNP:rs2032878063." evidence="12">
    <original>I</original>
    <variation>T</variation>
    <location>
        <position position="3239"/>
    </location>
</feature>
<feature type="sequence variant" id="VAR_041657" description="In a breast infiltrating ductal carcinoma sample; somatic mutation." evidence="12">
    <original>K</original>
    <variation>Q</variation>
    <location>
        <position position="3583"/>
    </location>
</feature>
<feature type="mutagenesis site" description="Loss of function." evidence="6 7 10">
    <original>D</original>
    <variation>A</variation>
    <location>
        <position position="2335"/>
    </location>
</feature>
<feature type="sequence conflict" description="In Ref. 2; BAB70696." evidence="26" ref="2">
    <original>G</original>
    <variation>GGGGG</variation>
    <location>
        <position position="14"/>
    </location>
</feature>
<feature type="sequence conflict" description="In Ref. 2; BAB70696." evidence="26" ref="2">
    <original>K</original>
    <variation>N</variation>
    <location>
        <position position="20"/>
    </location>
</feature>
<feature type="sequence conflict" description="In Ref. 2; BAB70696." evidence="26" ref="2">
    <original>P</original>
    <variation>S</variation>
    <location>
        <position position="22"/>
    </location>
</feature>
<feature type="sequence conflict" description="In Ref. 2; BAB70696." evidence="26" ref="2">
    <original>D</original>
    <variation>G</variation>
    <location>
        <position position="40"/>
    </location>
</feature>
<feature type="sequence conflict" description="In Ref. 2; BAB70696." evidence="26" ref="2">
    <original>S</original>
    <variation>A</variation>
    <location>
        <position position="686"/>
    </location>
</feature>
<feature type="sequence conflict" description="In Ref. 2; BAB70696." evidence="26" ref="2">
    <original>K</original>
    <variation>R</variation>
    <location>
        <position position="743"/>
    </location>
</feature>
<feature type="sequence conflict" description="In Ref. 2; BAB70696." evidence="26" ref="2">
    <original>C</original>
    <variation>F</variation>
    <location>
        <position position="1193"/>
    </location>
</feature>
<feature type="sequence conflict" description="In Ref. 2; BAB70696." evidence="26" ref="2">
    <original>K</original>
    <variation>R</variation>
    <location>
        <position position="2009"/>
    </location>
</feature>
<feature type="sequence conflict" description="In Ref. 1; AAK58892." evidence="26" ref="1">
    <original>S</original>
    <variation>N</variation>
    <location>
        <position position="2077"/>
    </location>
</feature>
<feature type="helix" evidence="37">
    <location>
        <begin position="38"/>
        <end position="42"/>
    </location>
</feature>
<feature type="helix" evidence="37">
    <location>
        <begin position="62"/>
        <end position="69"/>
    </location>
</feature>
<feature type="helix" evidence="37">
    <location>
        <begin position="70"/>
        <end position="73"/>
    </location>
</feature>
<feature type="helix" evidence="37">
    <location>
        <begin position="81"/>
        <end position="88"/>
    </location>
</feature>
<feature type="turn" evidence="37">
    <location>
        <begin position="94"/>
        <end position="96"/>
    </location>
</feature>
<feature type="helix" evidence="37">
    <location>
        <begin position="97"/>
        <end position="102"/>
    </location>
</feature>
<feature type="helix" evidence="37">
    <location>
        <begin position="103"/>
        <end position="105"/>
    </location>
</feature>
<feature type="strand" evidence="37">
    <location>
        <begin position="110"/>
        <end position="113"/>
    </location>
</feature>
<feature type="helix" evidence="37">
    <location>
        <begin position="114"/>
        <end position="117"/>
    </location>
</feature>
<feature type="helix" evidence="37">
    <location>
        <begin position="124"/>
        <end position="141"/>
    </location>
</feature>
<feature type="strand" evidence="37">
    <location>
        <begin position="143"/>
        <end position="148"/>
    </location>
</feature>
<feature type="helix" evidence="37">
    <location>
        <begin position="151"/>
        <end position="153"/>
    </location>
</feature>
<feature type="helix" evidence="37">
    <location>
        <begin position="154"/>
        <end position="162"/>
    </location>
</feature>
<feature type="turn" evidence="37">
    <location>
        <begin position="163"/>
        <end position="167"/>
    </location>
</feature>
<feature type="helix" evidence="37">
    <location>
        <begin position="171"/>
        <end position="174"/>
    </location>
</feature>
<feature type="helix" evidence="37">
    <location>
        <begin position="178"/>
        <end position="181"/>
    </location>
</feature>
<feature type="helix" evidence="37">
    <location>
        <begin position="189"/>
        <end position="198"/>
    </location>
</feature>
<feature type="turn" evidence="37">
    <location>
        <begin position="199"/>
        <end position="201"/>
    </location>
</feature>
<feature type="helix" evidence="37">
    <location>
        <begin position="202"/>
        <end position="204"/>
    </location>
</feature>
<feature type="helix" evidence="37">
    <location>
        <begin position="211"/>
        <end position="222"/>
    </location>
</feature>
<feature type="helix" evidence="37">
    <location>
        <begin position="230"/>
        <end position="245"/>
    </location>
</feature>
<feature type="helix" evidence="39">
    <location>
        <begin position="261"/>
        <end position="274"/>
    </location>
</feature>
<feature type="helix" evidence="39">
    <location>
        <begin position="281"/>
        <end position="292"/>
    </location>
</feature>
<feature type="helix" evidence="39">
    <location>
        <begin position="297"/>
        <end position="306"/>
    </location>
</feature>
<feature type="helix" evidence="39">
    <location>
        <begin position="307"/>
        <end position="309"/>
    </location>
</feature>
<feature type="helix" evidence="42">
    <location>
        <begin position="314"/>
        <end position="321"/>
    </location>
</feature>
<feature type="helix" evidence="37">
    <location>
        <begin position="322"/>
        <end position="324"/>
    </location>
</feature>
<feature type="helix" evidence="37">
    <location>
        <begin position="326"/>
        <end position="330"/>
    </location>
</feature>
<feature type="helix" evidence="42">
    <location>
        <begin position="336"/>
        <end position="346"/>
    </location>
</feature>
<feature type="helix" evidence="42">
    <location>
        <begin position="356"/>
        <end position="373"/>
    </location>
</feature>
<feature type="helix" evidence="37">
    <location>
        <begin position="380"/>
        <end position="387"/>
    </location>
</feature>
<feature type="helix" evidence="37">
    <location>
        <begin position="389"/>
        <end position="394"/>
    </location>
</feature>
<feature type="helix" evidence="42">
    <location>
        <begin position="395"/>
        <end position="411"/>
    </location>
</feature>
<feature type="helix" evidence="37">
    <location>
        <begin position="421"/>
        <end position="424"/>
    </location>
</feature>
<feature type="helix" evidence="42">
    <location>
        <begin position="429"/>
        <end position="443"/>
    </location>
</feature>
<feature type="turn" evidence="43">
    <location>
        <begin position="445"/>
        <end position="447"/>
    </location>
</feature>
<feature type="helix" evidence="42">
    <location>
        <begin position="450"/>
        <end position="466"/>
    </location>
</feature>
<feature type="strand" evidence="39">
    <location>
        <begin position="469"/>
        <end position="471"/>
    </location>
</feature>
<feature type="helix" evidence="42">
    <location>
        <begin position="475"/>
        <end position="486"/>
    </location>
</feature>
<feature type="strand" evidence="39">
    <location>
        <begin position="490"/>
        <end position="492"/>
    </location>
</feature>
<feature type="helix" evidence="42">
    <location>
        <begin position="494"/>
        <end position="510"/>
    </location>
</feature>
<feature type="helix" evidence="42">
    <location>
        <begin position="517"/>
        <end position="523"/>
    </location>
</feature>
<feature type="helix" evidence="42">
    <location>
        <begin position="529"/>
        <end position="532"/>
    </location>
</feature>
<feature type="helix" evidence="42">
    <location>
        <begin position="533"/>
        <end position="535"/>
    </location>
</feature>
<feature type="helix" evidence="42">
    <location>
        <begin position="539"/>
        <end position="552"/>
    </location>
</feature>
<feature type="helix" evidence="42">
    <location>
        <begin position="558"/>
        <end position="582"/>
    </location>
</feature>
<feature type="helix" evidence="40">
    <location>
        <begin position="590"/>
        <end position="592"/>
    </location>
</feature>
<feature type="helix" evidence="42">
    <location>
        <begin position="595"/>
        <end position="597"/>
    </location>
</feature>
<feature type="helix" evidence="37">
    <location>
        <begin position="598"/>
        <end position="600"/>
    </location>
</feature>
<feature type="helix" evidence="42">
    <location>
        <begin position="604"/>
        <end position="622"/>
    </location>
</feature>
<feature type="helix" evidence="37">
    <location>
        <begin position="625"/>
        <end position="630"/>
    </location>
</feature>
<feature type="strand" evidence="43">
    <location>
        <begin position="634"/>
        <end position="636"/>
    </location>
</feature>
<feature type="helix" evidence="42">
    <location>
        <begin position="638"/>
        <end position="644"/>
    </location>
</feature>
<feature type="helix" evidence="42">
    <location>
        <begin position="647"/>
        <end position="650"/>
    </location>
</feature>
<feature type="helix" evidence="42">
    <location>
        <begin position="653"/>
        <end position="656"/>
    </location>
</feature>
<feature type="helix" evidence="42">
    <location>
        <begin position="658"/>
        <end position="673"/>
    </location>
</feature>
<feature type="helix" evidence="42">
    <location>
        <begin position="674"/>
        <end position="678"/>
    </location>
</feature>
<feature type="turn" evidence="43">
    <location>
        <begin position="679"/>
        <end position="681"/>
    </location>
</feature>
<feature type="turn" evidence="42">
    <location>
        <begin position="700"/>
        <end position="705"/>
    </location>
</feature>
<feature type="helix" evidence="42">
    <location>
        <begin position="706"/>
        <end position="718"/>
    </location>
</feature>
<feature type="helix" evidence="42">
    <location>
        <begin position="725"/>
        <end position="741"/>
    </location>
</feature>
<feature type="helix" evidence="42">
    <location>
        <begin position="746"/>
        <end position="753"/>
    </location>
</feature>
<feature type="helix" evidence="42">
    <location>
        <begin position="755"/>
        <end position="766"/>
    </location>
</feature>
<feature type="strand" evidence="39">
    <location>
        <begin position="768"/>
        <end position="771"/>
    </location>
</feature>
<feature type="helix" evidence="42">
    <location>
        <begin position="773"/>
        <end position="785"/>
    </location>
</feature>
<feature type="helix" evidence="42">
    <location>
        <begin position="792"/>
        <end position="805"/>
    </location>
</feature>
<feature type="strand" evidence="42">
    <location>
        <begin position="807"/>
        <end position="810"/>
    </location>
</feature>
<feature type="helix" evidence="42">
    <location>
        <begin position="811"/>
        <end position="821"/>
    </location>
</feature>
<feature type="helix" evidence="42">
    <location>
        <begin position="826"/>
        <end position="829"/>
    </location>
</feature>
<feature type="strand" evidence="37">
    <location>
        <begin position="831"/>
        <end position="833"/>
    </location>
</feature>
<feature type="helix" evidence="42">
    <location>
        <begin position="836"/>
        <end position="850"/>
    </location>
</feature>
<feature type="helix" evidence="42">
    <location>
        <begin position="859"/>
        <end position="870"/>
    </location>
</feature>
<feature type="helix" evidence="42">
    <location>
        <begin position="882"/>
        <end position="889"/>
    </location>
</feature>
<feature type="turn" evidence="37">
    <location>
        <begin position="890"/>
        <end position="895"/>
    </location>
</feature>
<feature type="helix" evidence="42">
    <location>
        <begin position="903"/>
        <end position="905"/>
    </location>
</feature>
<feature type="helix" evidence="42">
    <location>
        <begin position="909"/>
        <end position="926"/>
    </location>
</feature>
<feature type="turn" evidence="42">
    <location>
        <begin position="927"/>
        <end position="929"/>
    </location>
</feature>
<feature type="helix" evidence="42">
    <location>
        <begin position="936"/>
        <end position="955"/>
    </location>
</feature>
<feature type="turn" evidence="42">
    <location>
        <begin position="962"/>
        <end position="964"/>
    </location>
</feature>
<feature type="helix" evidence="42">
    <location>
        <begin position="970"/>
        <end position="998"/>
    </location>
</feature>
<feature type="strand" evidence="42">
    <location>
        <begin position="1002"/>
        <end position="1005"/>
    </location>
</feature>
<feature type="helix" evidence="42">
    <location>
        <begin position="1010"/>
        <end position="1018"/>
    </location>
</feature>
<feature type="helix" evidence="42">
    <location>
        <begin position="1020"/>
        <end position="1040"/>
    </location>
</feature>
<feature type="helix" evidence="42">
    <location>
        <begin position="1044"/>
        <end position="1057"/>
    </location>
</feature>
<feature type="helix" evidence="42">
    <location>
        <begin position="1068"/>
        <end position="1082"/>
    </location>
</feature>
<feature type="helix" evidence="42">
    <location>
        <begin position="1086"/>
        <end position="1096"/>
    </location>
</feature>
<feature type="helix" evidence="42">
    <location>
        <begin position="1107"/>
        <end position="1114"/>
    </location>
</feature>
<feature type="turn" evidence="37">
    <location>
        <begin position="1115"/>
        <end position="1117"/>
    </location>
</feature>
<feature type="helix" evidence="42">
    <location>
        <begin position="1118"/>
        <end position="1133"/>
    </location>
</feature>
<feature type="strand" evidence="37">
    <location>
        <begin position="1134"/>
        <end position="1136"/>
    </location>
</feature>
<feature type="helix" evidence="42">
    <location>
        <begin position="1144"/>
        <end position="1150"/>
    </location>
</feature>
<feature type="helix" evidence="42">
    <location>
        <begin position="1180"/>
        <end position="1196"/>
    </location>
</feature>
<feature type="helix" evidence="42">
    <location>
        <begin position="1200"/>
        <end position="1215"/>
    </location>
</feature>
<feature type="turn" evidence="39">
    <location>
        <begin position="1216"/>
        <end position="1218"/>
    </location>
</feature>
<feature type="helix" evidence="42">
    <location>
        <begin position="1228"/>
        <end position="1239"/>
    </location>
</feature>
<feature type="helix" evidence="42">
    <location>
        <begin position="1242"/>
        <end position="1249"/>
    </location>
</feature>
<feature type="strand" evidence="42">
    <location>
        <begin position="1251"/>
        <end position="1255"/>
    </location>
</feature>
<feature type="helix" evidence="42">
    <location>
        <begin position="1282"/>
        <end position="1304"/>
    </location>
</feature>
<feature type="strand" evidence="42">
    <location>
        <begin position="1315"/>
        <end position="1317"/>
    </location>
</feature>
<feature type="helix" evidence="42">
    <location>
        <begin position="1318"/>
        <end position="1331"/>
    </location>
</feature>
<feature type="helix" evidence="42">
    <location>
        <begin position="1333"/>
        <end position="1340"/>
    </location>
</feature>
<feature type="helix" evidence="42">
    <location>
        <begin position="1348"/>
        <end position="1366"/>
    </location>
</feature>
<feature type="helix" evidence="42">
    <location>
        <begin position="1371"/>
        <end position="1373"/>
    </location>
</feature>
<feature type="helix" evidence="42">
    <location>
        <begin position="1379"/>
        <end position="1382"/>
    </location>
</feature>
<feature type="helix" evidence="42">
    <location>
        <begin position="1391"/>
        <end position="1406"/>
    </location>
</feature>
<feature type="helix" evidence="42">
    <location>
        <begin position="1407"/>
        <end position="1409"/>
    </location>
</feature>
<feature type="helix" evidence="42">
    <location>
        <begin position="1418"/>
        <end position="1433"/>
    </location>
</feature>
<feature type="turn" evidence="42">
    <location>
        <begin position="1434"/>
        <end position="1436"/>
    </location>
</feature>
<feature type="helix" evidence="42">
    <location>
        <begin position="1438"/>
        <end position="1449"/>
    </location>
</feature>
<feature type="helix" evidence="42">
    <location>
        <begin position="1459"/>
        <end position="1466"/>
    </location>
</feature>
<feature type="helix" evidence="37">
    <location>
        <begin position="1467"/>
        <end position="1479"/>
    </location>
</feature>
<feature type="helix" evidence="42">
    <location>
        <begin position="1480"/>
        <end position="1494"/>
    </location>
</feature>
<feature type="helix" evidence="42">
    <location>
        <begin position="1497"/>
        <end position="1511"/>
    </location>
</feature>
<feature type="strand" evidence="42">
    <location>
        <begin position="1514"/>
        <end position="1516"/>
    </location>
</feature>
<feature type="helix" evidence="42">
    <location>
        <begin position="1518"/>
        <end position="1534"/>
    </location>
</feature>
<feature type="helix" evidence="42">
    <location>
        <begin position="1536"/>
        <end position="1550"/>
    </location>
</feature>
<feature type="helix" evidence="42">
    <location>
        <begin position="1560"/>
        <end position="1569"/>
    </location>
</feature>
<feature type="helix" evidence="39">
    <location>
        <begin position="1587"/>
        <end position="1590"/>
    </location>
</feature>
<feature type="strand" evidence="42">
    <location>
        <begin position="1591"/>
        <end position="1593"/>
    </location>
</feature>
<feature type="helix" evidence="42">
    <location>
        <begin position="1596"/>
        <end position="1611"/>
    </location>
</feature>
<feature type="helix" evidence="42">
    <location>
        <begin position="1616"/>
        <end position="1636"/>
    </location>
</feature>
<feature type="helix" evidence="39">
    <location>
        <begin position="1640"/>
        <end position="1648"/>
    </location>
</feature>
<feature type="helix" evidence="42">
    <location>
        <begin position="1651"/>
        <end position="1659"/>
    </location>
</feature>
<feature type="helix" evidence="42">
    <location>
        <begin position="1668"/>
        <end position="1677"/>
    </location>
</feature>
<feature type="helix" evidence="38">
    <location>
        <begin position="1686"/>
        <end position="1695"/>
    </location>
</feature>
<feature type="helix" evidence="42">
    <location>
        <begin position="1708"/>
        <end position="1719"/>
    </location>
</feature>
<feature type="helix" evidence="39">
    <location>
        <begin position="1720"/>
        <end position="1725"/>
    </location>
</feature>
<feature type="helix" evidence="42">
    <location>
        <begin position="1729"/>
        <end position="1740"/>
    </location>
</feature>
<feature type="helix" evidence="42">
    <location>
        <begin position="1742"/>
        <end position="1756"/>
    </location>
</feature>
<feature type="helix" evidence="42">
    <location>
        <begin position="1782"/>
        <end position="1798"/>
    </location>
</feature>
<feature type="strand" evidence="42">
    <location>
        <begin position="1801"/>
        <end position="1803"/>
    </location>
</feature>
<feature type="helix" evidence="42">
    <location>
        <begin position="1804"/>
        <end position="1813"/>
    </location>
</feature>
<feature type="turn" evidence="42">
    <location>
        <begin position="1818"/>
        <end position="1821"/>
    </location>
</feature>
<feature type="helix" evidence="42">
    <location>
        <begin position="1823"/>
        <end position="1828"/>
    </location>
</feature>
<feature type="helix" evidence="42">
    <location>
        <begin position="1829"/>
        <end position="1831"/>
    </location>
</feature>
<feature type="helix" evidence="42">
    <location>
        <begin position="1836"/>
        <end position="1849"/>
    </location>
</feature>
<feature type="helix" evidence="42">
    <location>
        <begin position="1853"/>
        <end position="1855"/>
    </location>
</feature>
<feature type="helix" evidence="42">
    <location>
        <begin position="1857"/>
        <end position="1864"/>
    </location>
</feature>
<feature type="helix" evidence="42">
    <location>
        <begin position="1925"/>
        <end position="1938"/>
    </location>
</feature>
<feature type="strand" evidence="37">
    <location>
        <begin position="1939"/>
        <end position="1941"/>
    </location>
</feature>
<feature type="helix" evidence="42">
    <location>
        <begin position="1942"/>
        <end position="1957"/>
    </location>
</feature>
<feature type="helix" evidence="42">
    <location>
        <begin position="1963"/>
        <end position="1977"/>
    </location>
</feature>
<feature type="helix" evidence="39">
    <location>
        <begin position="1980"/>
        <end position="1992"/>
    </location>
</feature>
<feature type="helix" evidence="42">
    <location>
        <begin position="2011"/>
        <end position="2023"/>
    </location>
</feature>
<feature type="helix" evidence="42">
    <location>
        <begin position="2036"/>
        <end position="2044"/>
    </location>
</feature>
<feature type="helix" evidence="42">
    <location>
        <begin position="2047"/>
        <end position="2054"/>
    </location>
</feature>
<feature type="helix" evidence="42">
    <location>
        <begin position="2069"/>
        <end position="2082"/>
    </location>
</feature>
<feature type="strand" evidence="37">
    <location>
        <begin position="2085"/>
        <end position="2087"/>
    </location>
</feature>
<feature type="strand" evidence="42">
    <location>
        <begin position="2090"/>
        <end position="2092"/>
    </location>
</feature>
<feature type="turn" evidence="43">
    <location>
        <begin position="2097"/>
        <end position="2101"/>
    </location>
</feature>
<feature type="strand" evidence="42">
    <location>
        <begin position="2120"/>
        <end position="2124"/>
    </location>
</feature>
<feature type="strand" evidence="42">
    <location>
        <begin position="2126"/>
        <end position="2130"/>
    </location>
</feature>
<feature type="strand" evidence="42">
    <location>
        <begin position="2132"/>
        <end position="2136"/>
    </location>
</feature>
<feature type="strand" evidence="42">
    <location>
        <begin position="2138"/>
        <end position="2144"/>
    </location>
</feature>
<feature type="strand" evidence="42">
    <location>
        <begin position="2149"/>
        <end position="2157"/>
    </location>
</feature>
<feature type="helix" evidence="42">
    <location>
        <begin position="2161"/>
        <end position="2175"/>
    </location>
</feature>
<feature type="turn" evidence="42">
    <location>
        <begin position="2176"/>
        <end position="2179"/>
    </location>
</feature>
<feature type="helix" evidence="42">
    <location>
        <begin position="2180"/>
        <end position="2182"/>
    </location>
</feature>
<feature type="strand" evidence="42">
    <location>
        <begin position="2195"/>
        <end position="2197"/>
    </location>
</feature>
<feature type="strand" evidence="42">
    <location>
        <begin position="2199"/>
        <end position="2201"/>
    </location>
</feature>
<feature type="strand" evidence="42">
    <location>
        <begin position="2203"/>
        <end position="2206"/>
    </location>
</feature>
<feature type="strand" evidence="39">
    <location>
        <begin position="2212"/>
        <end position="2214"/>
    </location>
</feature>
<feature type="helix" evidence="42">
    <location>
        <begin position="2215"/>
        <end position="2231"/>
    </location>
</feature>
<feature type="helix" evidence="42">
    <location>
        <begin position="2249"/>
        <end position="2262"/>
    </location>
</feature>
<feature type="strand" evidence="42">
    <location>
        <begin position="2272"/>
        <end position="2274"/>
    </location>
</feature>
<feature type="helix" evidence="42">
    <location>
        <begin position="2277"/>
        <end position="2290"/>
    </location>
</feature>
<feature type="helix" evidence="42">
    <location>
        <begin position="2295"/>
        <end position="2303"/>
    </location>
</feature>
<feature type="helix" evidence="42">
    <location>
        <begin position="2307"/>
        <end position="2331"/>
    </location>
</feature>
<feature type="strand" evidence="42">
    <location>
        <begin position="2340"/>
        <end position="2343"/>
    </location>
</feature>
<feature type="turn" evidence="42">
    <location>
        <begin position="2345"/>
        <end position="2347"/>
    </location>
</feature>
<feature type="strand" evidence="42">
    <location>
        <begin position="2350"/>
        <end position="2352"/>
    </location>
</feature>
<feature type="turn" evidence="42">
    <location>
        <begin position="2356"/>
        <end position="2360"/>
    </location>
</feature>
<feature type="helix" evidence="42">
    <location>
        <begin position="2361"/>
        <end position="2363"/>
    </location>
</feature>
<feature type="strand" evidence="42">
    <location>
        <begin position="2364"/>
        <end position="2367"/>
    </location>
</feature>
<feature type="helix" evidence="42">
    <location>
        <begin position="2377"/>
        <end position="2381"/>
    </location>
</feature>
<feature type="strand" evidence="37">
    <location>
        <begin position="2384"/>
        <end position="2386"/>
    </location>
</feature>
<feature type="strand" evidence="39">
    <location>
        <begin position="2388"/>
        <end position="2390"/>
    </location>
</feature>
<feature type="helix" evidence="42">
    <location>
        <begin position="2391"/>
        <end position="2405"/>
    </location>
</feature>
<feature type="helix" evidence="42">
    <location>
        <begin position="2407"/>
        <end position="2418"/>
    </location>
</feature>
<feature type="strand" evidence="37">
    <location>
        <begin position="2422"/>
        <end position="2424"/>
    </location>
</feature>
<feature type="helix" evidence="42">
    <location>
        <begin position="3608"/>
        <end position="3620"/>
    </location>
</feature>
<feature type="strand" evidence="41">
    <location>
        <begin position="3627"/>
        <end position="3629"/>
    </location>
</feature>
<feature type="helix" evidence="42">
    <location>
        <begin position="3633"/>
        <end position="3645"/>
    </location>
</feature>
<feature type="helix" evidence="42">
    <location>
        <begin position="3647"/>
        <end position="3651"/>
    </location>
</feature>
<feature type="helix" evidence="42">
    <location>
        <begin position="3655"/>
        <end position="3657"/>
    </location>
</feature>